<sequence>MQRVNMIMAESPGLITICLLGYLLSAECTVFLDHENANKILNRPKRYNSGKLEEFVQGNLERECMEEKCSFEEAREVFENTERTTEFWKQYVDGDQCESNPCLNGGSCKDDINSYECWCPFGFEGKNCELDVTCNIKNGRCEQFCKNSADNKVVCSCTEGYRLAENQKSCEPAVPFPCGRVSVSQTSKLTRAETVFPDVDYVNSTEAETILDNITQSTQSFNDFTRVVGGEDAKPGQFPWQVVLNGKVDAFCGGSIVNEKWIVTAAHCVETGVKITVVAGEHNIEETEHTEQKRNVIRIIPHHNYNAAINKYNHDIALLELDEPLVLNSYVTPICIADKEYTNIFLKFGSGYVSGWGRVFHKGRSALVLQYLRVPLVDRATCLRSTKFTIYNNMFCAGFHEGGRDSCQGDSGGPHVTEVEGTSFLTGIISWGEECAMKGKYGIYTKVSRYVNWIKEKTKLT</sequence>
<gene>
    <name type="primary">F9</name>
</gene>
<dbReference type="EC" id="3.4.21.22" evidence="13 29 30 42"/>
<dbReference type="EMBL" id="J00136">
    <property type="protein sequence ID" value="AAA98726.1"/>
    <property type="molecule type" value="mRNA"/>
</dbReference>
<dbReference type="EMBL" id="J00137">
    <property type="protein sequence ID" value="AAA52763.1"/>
    <property type="molecule type" value="mRNA"/>
</dbReference>
<dbReference type="EMBL" id="K02053">
    <property type="protein sequence ID" value="AAA56822.1"/>
    <property type="molecule type" value="Genomic_DNA"/>
</dbReference>
<dbReference type="EMBL" id="K02048">
    <property type="protein sequence ID" value="AAA56822.1"/>
    <property type="status" value="JOINED"/>
    <property type="molecule type" value="Genomic_DNA"/>
</dbReference>
<dbReference type="EMBL" id="K02049">
    <property type="protein sequence ID" value="AAA56822.1"/>
    <property type="status" value="JOINED"/>
    <property type="molecule type" value="Genomic_DNA"/>
</dbReference>
<dbReference type="EMBL" id="K02051">
    <property type="protein sequence ID" value="AAA56822.1"/>
    <property type="status" value="JOINED"/>
    <property type="molecule type" value="Genomic_DNA"/>
</dbReference>
<dbReference type="EMBL" id="K02052">
    <property type="protein sequence ID" value="AAA56822.1"/>
    <property type="status" value="JOINED"/>
    <property type="molecule type" value="Genomic_DNA"/>
</dbReference>
<dbReference type="EMBL" id="K02402">
    <property type="protein sequence ID" value="AAB59620.1"/>
    <property type="molecule type" value="Genomic_DNA"/>
</dbReference>
<dbReference type="EMBL" id="M11309">
    <property type="protein sequence ID" value="AAA52023.1"/>
    <property type="molecule type" value="mRNA"/>
</dbReference>
<dbReference type="EMBL" id="AL033403">
    <property type="status" value="NOT_ANNOTATED_CDS"/>
    <property type="molecule type" value="Genomic_DNA"/>
</dbReference>
<dbReference type="EMBL" id="AB186358">
    <property type="protein sequence ID" value="BAD89383.1"/>
    <property type="molecule type" value="mRNA"/>
</dbReference>
<dbReference type="EMBL" id="AF536327">
    <property type="protein sequence ID" value="AAM96188.1"/>
    <property type="molecule type" value="Genomic_DNA"/>
</dbReference>
<dbReference type="EMBL" id="FR846239">
    <property type="protein sequence ID" value="CCA61111.1"/>
    <property type="molecule type" value="mRNA"/>
</dbReference>
<dbReference type="EMBL" id="AK292749">
    <property type="protein sequence ID" value="BAF85438.1"/>
    <property type="molecule type" value="mRNA"/>
</dbReference>
<dbReference type="EMBL" id="CH471150">
    <property type="protein sequence ID" value="EAW88433.1"/>
    <property type="molecule type" value="Genomic_DNA"/>
</dbReference>
<dbReference type="EMBL" id="BC109214">
    <property type="protein sequence ID" value="AAI09215.1"/>
    <property type="molecule type" value="mRNA"/>
</dbReference>
<dbReference type="EMBL" id="BC109215">
    <property type="protein sequence ID" value="AAI09216.1"/>
    <property type="molecule type" value="mRNA"/>
</dbReference>
<dbReference type="EMBL" id="S68634">
    <property type="protein sequence ID" value="AAB29758.1"/>
    <property type="molecule type" value="Genomic_DNA"/>
</dbReference>
<dbReference type="EMBL" id="M35672">
    <property type="protein sequence ID" value="AAA51981.1"/>
    <property type="molecule type" value="mRNA"/>
</dbReference>
<dbReference type="EMBL" id="M19063">
    <property type="protein sequence ID" value="AAA52456.1"/>
    <property type="molecule type" value="Genomic_DNA"/>
</dbReference>
<dbReference type="EMBL" id="S66752">
    <property type="protein sequence ID" value="AAB28588.1"/>
    <property type="molecule type" value="Genomic_DNA"/>
</dbReference>
<dbReference type="CCDS" id="CCDS14666.1">
    <molecule id="P00740-1"/>
</dbReference>
<dbReference type="CCDS" id="CCDS83495.1">
    <molecule id="P00740-2"/>
</dbReference>
<dbReference type="PIR" id="A00922">
    <property type="entry name" value="KFHU"/>
</dbReference>
<dbReference type="RefSeq" id="NP_000124.1">
    <molecule id="P00740-1"/>
    <property type="nucleotide sequence ID" value="NM_000133.4"/>
</dbReference>
<dbReference type="RefSeq" id="NP_001300842.1">
    <molecule id="P00740-2"/>
    <property type="nucleotide sequence ID" value="NM_001313913.2"/>
</dbReference>
<dbReference type="PDB" id="1CFH">
    <property type="method" value="NMR"/>
    <property type="chains" value="A=47-93"/>
</dbReference>
<dbReference type="PDB" id="1CFI">
    <property type="method" value="NMR"/>
    <property type="chains" value="A=47-93"/>
</dbReference>
<dbReference type="PDB" id="1EDM">
    <property type="method" value="X-ray"/>
    <property type="resolution" value="1.50 A"/>
    <property type="chains" value="B/C=92-130"/>
</dbReference>
<dbReference type="PDB" id="1IXA">
    <property type="method" value="NMR"/>
    <property type="chains" value="A=92-130"/>
</dbReference>
<dbReference type="PDB" id="1MGX">
    <property type="method" value="NMR"/>
    <property type="chains" value="A=47-93"/>
</dbReference>
<dbReference type="PDB" id="1NL0">
    <property type="method" value="X-ray"/>
    <property type="resolution" value="2.20 A"/>
    <property type="chains" value="G=47-91"/>
</dbReference>
<dbReference type="PDB" id="1RFN">
    <property type="method" value="X-ray"/>
    <property type="resolution" value="2.80 A"/>
    <property type="chains" value="A=227-461, B=133-188"/>
</dbReference>
<dbReference type="PDB" id="2WPH">
    <property type="method" value="X-ray"/>
    <property type="resolution" value="1.50 A"/>
    <property type="chains" value="E=133-191, S=227-461"/>
</dbReference>
<dbReference type="PDB" id="2WPI">
    <property type="method" value="X-ray"/>
    <property type="resolution" value="1.99 A"/>
    <property type="chains" value="E=133-191, S=227-461"/>
</dbReference>
<dbReference type="PDB" id="2WPJ">
    <property type="method" value="X-ray"/>
    <property type="resolution" value="1.60 A"/>
    <property type="chains" value="E=133-191, S=227-461"/>
</dbReference>
<dbReference type="PDB" id="2WPK">
    <property type="method" value="X-ray"/>
    <property type="resolution" value="2.21 A"/>
    <property type="chains" value="E=133-191, S=227-461"/>
</dbReference>
<dbReference type="PDB" id="2WPL">
    <property type="method" value="X-ray"/>
    <property type="resolution" value="1.82 A"/>
    <property type="chains" value="E=133-191, S=227-461"/>
</dbReference>
<dbReference type="PDB" id="2WPM">
    <property type="method" value="X-ray"/>
    <property type="resolution" value="2.00 A"/>
    <property type="chains" value="E=133-191, S=227-461"/>
</dbReference>
<dbReference type="PDB" id="3KCG">
    <property type="method" value="X-ray"/>
    <property type="resolution" value="1.70 A"/>
    <property type="chains" value="H=227-461, L=131-188"/>
</dbReference>
<dbReference type="PDB" id="3LC3">
    <property type="method" value="X-ray"/>
    <property type="resolution" value="1.90 A"/>
    <property type="chains" value="A/C=227-461, B/D=133-188"/>
</dbReference>
<dbReference type="PDB" id="3LC5">
    <property type="method" value="X-ray"/>
    <property type="resolution" value="2.62 A"/>
    <property type="chains" value="A=227-461, B=133-188"/>
</dbReference>
<dbReference type="PDB" id="4WM0">
    <property type="method" value="X-ray"/>
    <property type="resolution" value="2.37 A"/>
    <property type="chains" value="D=92-130"/>
</dbReference>
<dbReference type="PDB" id="4WMA">
    <property type="method" value="X-ray"/>
    <property type="resolution" value="1.62 A"/>
    <property type="chains" value="D=92-130"/>
</dbReference>
<dbReference type="PDB" id="4WMB">
    <property type="method" value="X-ray"/>
    <property type="resolution" value="2.05 A"/>
    <property type="chains" value="D=92-130"/>
</dbReference>
<dbReference type="PDB" id="4WMI">
    <property type="method" value="X-ray"/>
    <property type="resolution" value="1.87 A"/>
    <property type="chains" value="D=92-130"/>
</dbReference>
<dbReference type="PDB" id="4WMK">
    <property type="method" value="X-ray"/>
    <property type="resolution" value="2.08 A"/>
    <property type="chains" value="D=92-130"/>
</dbReference>
<dbReference type="PDB" id="4WN2">
    <property type="method" value="X-ray"/>
    <property type="resolution" value="1.95 A"/>
    <property type="chains" value="D=92-130"/>
</dbReference>
<dbReference type="PDB" id="4WNH">
    <property type="method" value="X-ray"/>
    <property type="resolution" value="1.95 A"/>
    <property type="chains" value="D=92-130"/>
</dbReference>
<dbReference type="PDB" id="4YZU">
    <property type="method" value="X-ray"/>
    <property type="resolution" value="1.41 A"/>
    <property type="chains" value="A=227-461, B=131-191"/>
</dbReference>
<dbReference type="PDB" id="4Z0K">
    <property type="method" value="X-ray"/>
    <property type="resolution" value="1.41 A"/>
    <property type="chains" value="A=227-461, B=131-191"/>
</dbReference>
<dbReference type="PDB" id="4ZAE">
    <property type="method" value="X-ray"/>
    <property type="resolution" value="1.86 A"/>
    <property type="chains" value="A=227-461, B=131-191"/>
</dbReference>
<dbReference type="PDB" id="5EGM">
    <property type="method" value="X-ray"/>
    <property type="resolution" value="1.84 A"/>
    <property type="chains" value="A=227-461, B=131-191"/>
</dbReference>
<dbReference type="PDB" id="5F84">
    <property type="method" value="X-ray"/>
    <property type="resolution" value="2.50 A"/>
    <property type="chains" value="B=92-130"/>
</dbReference>
<dbReference type="PDB" id="5F85">
    <property type="method" value="X-ray"/>
    <property type="resolution" value="2.15 A"/>
    <property type="chains" value="B=92-130"/>
</dbReference>
<dbReference type="PDB" id="5F86">
    <property type="method" value="X-ray"/>
    <property type="resolution" value="1.90 A"/>
    <property type="chains" value="B=92-130"/>
</dbReference>
<dbReference type="PDB" id="5JB8">
    <property type="method" value="X-ray"/>
    <property type="resolution" value="1.45 A"/>
    <property type="chains" value="E=134-191, S=227-461"/>
</dbReference>
<dbReference type="PDB" id="5JB9">
    <property type="method" value="X-ray"/>
    <property type="resolution" value="1.30 A"/>
    <property type="chains" value="E=134-191, S=227-461"/>
</dbReference>
<dbReference type="PDB" id="5JBA">
    <property type="method" value="X-ray"/>
    <property type="resolution" value="1.40 A"/>
    <property type="chains" value="E=134-191, S=227-461"/>
</dbReference>
<dbReference type="PDB" id="5JBB">
    <property type="method" value="X-ray"/>
    <property type="resolution" value="1.56 A"/>
    <property type="chains" value="E=134-191, S=227-461"/>
</dbReference>
<dbReference type="PDB" id="5JBC">
    <property type="method" value="X-ray"/>
    <property type="resolution" value="1.90 A"/>
    <property type="chains" value="E=134-191, S=227-461"/>
</dbReference>
<dbReference type="PDB" id="5TNO">
    <property type="method" value="X-ray"/>
    <property type="resolution" value="1.54 A"/>
    <property type="chains" value="A=227-461, B=130-191"/>
</dbReference>
<dbReference type="PDB" id="5TNT">
    <property type="method" value="X-ray"/>
    <property type="resolution" value="1.40 A"/>
    <property type="chains" value="A=227-461, B=130-191"/>
</dbReference>
<dbReference type="PDB" id="5VYG">
    <property type="method" value="X-ray"/>
    <property type="resolution" value="2.20 A"/>
    <property type="chains" value="A/B/C=92-130"/>
</dbReference>
<dbReference type="PDB" id="6MV4">
    <property type="method" value="X-ray"/>
    <property type="resolution" value="1.37 A"/>
    <property type="chains" value="H=227-461, L=132-185"/>
</dbReference>
<dbReference type="PDB" id="6RFK">
    <property type="method" value="X-ray"/>
    <property type="resolution" value="1.60 A"/>
    <property type="chains" value="E=130-191, S=227-461"/>
</dbReference>
<dbReference type="PDB" id="6X5J">
    <property type="method" value="X-ray"/>
    <property type="resolution" value="2.51 A"/>
    <property type="chains" value="A=227-461, B=130-191"/>
</dbReference>
<dbReference type="PDB" id="6X5L">
    <property type="method" value="X-ray"/>
    <property type="resolution" value="2.25 A"/>
    <property type="chains" value="A=227-460, B=130-191"/>
</dbReference>
<dbReference type="PDB" id="6X5P">
    <property type="method" value="X-ray"/>
    <property type="resolution" value="2.00 A"/>
    <property type="chains" value="A=227-461, B=130-191"/>
</dbReference>
<dbReference type="PDB" id="7AHV">
    <property type="method" value="X-ray"/>
    <property type="resolution" value="3.11 A"/>
    <property type="chains" value="H=227-461, L=130-188"/>
</dbReference>
<dbReference type="PDB" id="8EPC">
    <property type="method" value="X-ray"/>
    <property type="resolution" value="2.51 A"/>
    <property type="chains" value="A=130-190, B=227-461"/>
</dbReference>
<dbReference type="PDB" id="8EPH">
    <property type="method" value="X-ray"/>
    <property type="resolution" value="1.88 A"/>
    <property type="chains" value="A/C=93-190, B/D=227-461"/>
</dbReference>
<dbReference type="PDB" id="8EPK">
    <property type="method" value="X-ray"/>
    <property type="resolution" value="2.65 A"/>
    <property type="chains" value="A/C=130-190, B/D=227-461"/>
</dbReference>
<dbReference type="PDB" id="8OL9">
    <property type="method" value="X-ray"/>
    <property type="resolution" value="2.60 A"/>
    <property type="chains" value="H=227-461, L=130-188"/>
</dbReference>
<dbReference type="PDB" id="9BVK">
    <property type="method" value="EM"/>
    <property type="resolution" value="3.60 A"/>
    <property type="chains" value="P=29-92"/>
</dbReference>
<dbReference type="PDB" id="9BVR">
    <property type="method" value="EM"/>
    <property type="resolution" value="3.50 A"/>
    <property type="chains" value="P=29-92"/>
</dbReference>
<dbReference type="PDBsum" id="1CFH"/>
<dbReference type="PDBsum" id="1CFI"/>
<dbReference type="PDBsum" id="1EDM"/>
<dbReference type="PDBsum" id="1IXA"/>
<dbReference type="PDBsum" id="1MGX"/>
<dbReference type="PDBsum" id="1NL0"/>
<dbReference type="PDBsum" id="1RFN"/>
<dbReference type="PDBsum" id="2WPH"/>
<dbReference type="PDBsum" id="2WPI"/>
<dbReference type="PDBsum" id="2WPJ"/>
<dbReference type="PDBsum" id="2WPK"/>
<dbReference type="PDBsum" id="2WPL"/>
<dbReference type="PDBsum" id="2WPM"/>
<dbReference type="PDBsum" id="3KCG"/>
<dbReference type="PDBsum" id="3LC3"/>
<dbReference type="PDBsum" id="3LC5"/>
<dbReference type="PDBsum" id="4WM0"/>
<dbReference type="PDBsum" id="4WMA"/>
<dbReference type="PDBsum" id="4WMB"/>
<dbReference type="PDBsum" id="4WMI"/>
<dbReference type="PDBsum" id="4WMK"/>
<dbReference type="PDBsum" id="4WN2"/>
<dbReference type="PDBsum" id="4WNH"/>
<dbReference type="PDBsum" id="4YZU"/>
<dbReference type="PDBsum" id="4Z0K"/>
<dbReference type="PDBsum" id="4ZAE"/>
<dbReference type="PDBsum" id="5EGM"/>
<dbReference type="PDBsum" id="5F84"/>
<dbReference type="PDBsum" id="5F85"/>
<dbReference type="PDBsum" id="5F86"/>
<dbReference type="PDBsum" id="5JB8"/>
<dbReference type="PDBsum" id="5JB9"/>
<dbReference type="PDBsum" id="5JBA"/>
<dbReference type="PDBsum" id="5JBB"/>
<dbReference type="PDBsum" id="5JBC"/>
<dbReference type="PDBsum" id="5TNO"/>
<dbReference type="PDBsum" id="5TNT"/>
<dbReference type="PDBsum" id="5VYG"/>
<dbReference type="PDBsum" id="6MV4"/>
<dbReference type="PDBsum" id="6RFK"/>
<dbReference type="PDBsum" id="6X5J"/>
<dbReference type="PDBsum" id="6X5L"/>
<dbReference type="PDBsum" id="6X5P"/>
<dbReference type="PDBsum" id="7AHV"/>
<dbReference type="PDBsum" id="8EPC"/>
<dbReference type="PDBsum" id="8EPH"/>
<dbReference type="PDBsum" id="8EPK"/>
<dbReference type="PDBsum" id="8OL9"/>
<dbReference type="PDBsum" id="9BVK"/>
<dbReference type="PDBsum" id="9BVR"/>
<dbReference type="EMDB" id="EMD-44935"/>
<dbReference type="EMDB" id="EMD-44942"/>
<dbReference type="SMR" id="P00740"/>
<dbReference type="BioGRID" id="108456">
    <property type="interactions" value="57"/>
</dbReference>
<dbReference type="ComplexPortal" id="CPX-4945">
    <property type="entry name" value="Coagulation factor IXa complex"/>
</dbReference>
<dbReference type="DIP" id="DIP-58520N"/>
<dbReference type="ELM" id="P00740"/>
<dbReference type="FunCoup" id="P00740">
    <property type="interactions" value="186"/>
</dbReference>
<dbReference type="IntAct" id="P00740">
    <property type="interactions" value="40"/>
</dbReference>
<dbReference type="MINT" id="P00740"/>
<dbReference type="STRING" id="9606.ENSP00000218099"/>
<dbReference type="BindingDB" id="P00740"/>
<dbReference type="ChEMBL" id="CHEMBL2016"/>
<dbReference type="DrugBank" id="DB03136">
    <property type="generic name" value="4-Iodobenzo[B]Thiophene-2-Carboxamidine"/>
</dbReference>
<dbReference type="DrugBank" id="DB13192">
    <property type="generic name" value="Antihemophilic factor human"/>
</dbReference>
<dbReference type="DrugBank" id="DB00025">
    <property type="generic name" value="Antihemophilic factor, human recombinant"/>
</dbReference>
<dbReference type="DrugBank" id="DB13150">
    <property type="generic name" value="Coagulation factor VII human"/>
</dbReference>
<dbReference type="DrugBank" id="DB16662">
    <property type="generic name" value="Efanesoctocog alfa"/>
</dbReference>
<dbReference type="DrugBank" id="DB13923">
    <property type="generic name" value="Emicizumab"/>
</dbReference>
<dbReference type="DrugBank" id="DB16791">
    <property type="generic name" value="Etranacogene dezaparvovec"/>
</dbReference>
<dbReference type="DrugBank" id="DB03847">
    <property type="generic name" value="gamma-carboxy-L-glutamic acid"/>
</dbReference>
<dbReference type="DrugBank" id="DB09332">
    <property type="generic name" value="Kappadione"/>
</dbReference>
<dbReference type="DrugBank" id="DB13998">
    <property type="generic name" value="Lonoctocog alfa"/>
</dbReference>
<dbReference type="DrugBank" id="DB00170">
    <property type="generic name" value="Menadione"/>
</dbReference>
<dbReference type="DrugBank" id="DB13999">
    <property type="generic name" value="Moroctocog alfa"/>
</dbReference>
<dbReference type="DrugBank" id="DB05131">
    <property type="generic name" value="TTP889"/>
</dbReference>
<dbReference type="DrugBank" id="DB09109">
    <property type="generic name" value="Turoctocog alfa"/>
</dbReference>
<dbReference type="DrugBank" id="DB14738">
    <property type="generic name" value="Turoctocog alfa pegol"/>
</dbReference>
<dbReference type="DrugCentral" id="P00740"/>
<dbReference type="GuidetoPHARMACOLOGY" id="2364"/>
<dbReference type="Allergome" id="9616">
    <property type="allergen name" value="Hom s Factor IX"/>
</dbReference>
<dbReference type="MEROPS" id="S01.214"/>
<dbReference type="GlyConnect" id="96">
    <property type="glycosylation" value="13 N-Linked glycans, 1 O-Fuc glycan (1 site), 2 O-Glc glycans (1 site), 9 O-Linked glycans (6 sites)"/>
</dbReference>
<dbReference type="GlyCosmos" id="P00740">
    <property type="glycosylation" value="9 sites, 41 glycans"/>
</dbReference>
<dbReference type="GlyGen" id="P00740">
    <property type="glycosylation" value="11 sites, 23 N-linked glycans (1 site), 13 O-linked glycans (7 sites)"/>
</dbReference>
<dbReference type="iPTMnet" id="P00740"/>
<dbReference type="PhosphoSitePlus" id="P00740"/>
<dbReference type="BioMuta" id="F9"/>
<dbReference type="CPTAC" id="non-CPTAC-2647"/>
<dbReference type="jPOST" id="P00740"/>
<dbReference type="MassIVE" id="P00740"/>
<dbReference type="PaxDb" id="9606-ENSP00000218099"/>
<dbReference type="PeptideAtlas" id="P00740"/>
<dbReference type="ProteomicsDB" id="51274">
    <molecule id="P00740-1"/>
</dbReference>
<dbReference type="ABCD" id="P00740">
    <property type="antibodies" value="1 sequenced antibody"/>
</dbReference>
<dbReference type="Antibodypedia" id="367">
    <property type="antibodies" value="918 antibodies from 42 providers"/>
</dbReference>
<dbReference type="DNASU" id="2158"/>
<dbReference type="Ensembl" id="ENST00000218099.7">
    <molecule id="P00740-1"/>
    <property type="protein sequence ID" value="ENSP00000218099.2"/>
    <property type="gene ID" value="ENSG00000101981.12"/>
</dbReference>
<dbReference type="Ensembl" id="ENST00000394090.2">
    <molecule id="P00740-2"/>
    <property type="protein sequence ID" value="ENSP00000377650.2"/>
    <property type="gene ID" value="ENSG00000101981.12"/>
</dbReference>
<dbReference type="GeneID" id="2158"/>
<dbReference type="KEGG" id="hsa:2158"/>
<dbReference type="MANE-Select" id="ENST00000218099.7">
    <property type="protein sequence ID" value="ENSP00000218099.2"/>
    <property type="RefSeq nucleotide sequence ID" value="NM_000133.4"/>
    <property type="RefSeq protein sequence ID" value="NP_000124.1"/>
</dbReference>
<dbReference type="UCSC" id="uc004fas.2">
    <molecule id="P00740-1"/>
    <property type="organism name" value="human"/>
</dbReference>
<dbReference type="AGR" id="HGNC:3551"/>
<dbReference type="CTD" id="2158"/>
<dbReference type="DisGeNET" id="2158"/>
<dbReference type="GeneCards" id="F9"/>
<dbReference type="GeneReviews" id="F9"/>
<dbReference type="HGNC" id="HGNC:3551">
    <property type="gene designation" value="F9"/>
</dbReference>
<dbReference type="HPA" id="ENSG00000101981">
    <property type="expression patterns" value="Tissue enriched (liver)"/>
</dbReference>
<dbReference type="MalaCards" id="F9"/>
<dbReference type="MIM" id="300746">
    <property type="type" value="gene"/>
</dbReference>
<dbReference type="MIM" id="300807">
    <property type="type" value="phenotype"/>
</dbReference>
<dbReference type="MIM" id="301052">
    <property type="type" value="phenotype"/>
</dbReference>
<dbReference type="MIM" id="306900">
    <property type="type" value="phenotype"/>
</dbReference>
<dbReference type="neXtProt" id="NX_P00740"/>
<dbReference type="OpenTargets" id="ENSG00000101981"/>
<dbReference type="Orphanet" id="177929">
    <property type="disease" value="Bleeding disorder in hemophilia B carriers"/>
</dbReference>
<dbReference type="Orphanet" id="169799">
    <property type="disease" value="Mild hemophilia B"/>
</dbReference>
<dbReference type="Orphanet" id="169796">
    <property type="disease" value="Moderate hemophilia B"/>
</dbReference>
<dbReference type="Orphanet" id="169793">
    <property type="disease" value="Severe hemophilia B"/>
</dbReference>
<dbReference type="PharmGKB" id="PA27954"/>
<dbReference type="VEuPathDB" id="HostDB:ENSG00000101981"/>
<dbReference type="eggNOG" id="ENOG502QUEV">
    <property type="taxonomic scope" value="Eukaryota"/>
</dbReference>
<dbReference type="GeneTree" id="ENSGT00940000159516"/>
<dbReference type="HOGENOM" id="CLU_006842_19_5_1"/>
<dbReference type="InParanoid" id="P00740"/>
<dbReference type="OMA" id="SYECWCR"/>
<dbReference type="OrthoDB" id="8909918at2759"/>
<dbReference type="PAN-GO" id="P00740">
    <property type="GO annotations" value="3 GO annotations based on evolutionary models"/>
</dbReference>
<dbReference type="PhylomeDB" id="P00740"/>
<dbReference type="TreeFam" id="TF327329"/>
<dbReference type="BioCyc" id="MetaCyc:HS02329-MONOMER"/>
<dbReference type="BRENDA" id="3.4.21.22">
    <property type="organism ID" value="2681"/>
</dbReference>
<dbReference type="PathwayCommons" id="P00740"/>
<dbReference type="Reactome" id="R-HSA-140834">
    <property type="pathway name" value="Extrinsic Pathway of Fibrin Clot Formation"/>
</dbReference>
<dbReference type="Reactome" id="R-HSA-140837">
    <property type="pathway name" value="Intrinsic Pathway of Fibrin Clot Formation"/>
</dbReference>
<dbReference type="Reactome" id="R-HSA-159740">
    <property type="pathway name" value="Gamma-carboxylation of protein precursors"/>
</dbReference>
<dbReference type="Reactome" id="R-HSA-159763">
    <property type="pathway name" value="Transport of gamma-carboxylated protein precursors from the endoplasmic reticulum to the Golgi apparatus"/>
</dbReference>
<dbReference type="Reactome" id="R-HSA-159782">
    <property type="pathway name" value="Removal of aminoterminal propeptides from gamma-carboxylated proteins"/>
</dbReference>
<dbReference type="Reactome" id="R-HSA-9629569">
    <property type="pathway name" value="Protein hydroxylation"/>
</dbReference>
<dbReference type="Reactome" id="R-HSA-9672383">
    <property type="pathway name" value="Defective factor IX causes thrombophilia"/>
</dbReference>
<dbReference type="Reactome" id="R-HSA-9672396">
    <property type="pathway name" value="Defective cofactor function of FVIIIa variant"/>
</dbReference>
<dbReference type="Reactome" id="R-HSA-9673202">
    <property type="pathway name" value="Defective F9 variant does not activate FX"/>
</dbReference>
<dbReference type="Reactome" id="R-HSA-9673218">
    <property type="pathway name" value="Defective F9 secretion"/>
</dbReference>
<dbReference type="Reactome" id="R-HSA-9673221">
    <property type="pathway name" value="Defective F9 activation"/>
</dbReference>
<dbReference type="Reactome" id="R-HSA-9673240">
    <property type="pathway name" value="Defective gamma-carboxylation of F9"/>
</dbReference>
<dbReference type="SABIO-RK" id="P00740"/>
<dbReference type="SignaLink" id="P00740"/>
<dbReference type="SIGNOR" id="P00740"/>
<dbReference type="BioGRID-ORCS" id="2158">
    <property type="hits" value="30 hits in 776 CRISPR screens"/>
</dbReference>
<dbReference type="EvolutionaryTrace" id="P00740"/>
<dbReference type="GeneWiki" id="Factor_IX"/>
<dbReference type="GenomeRNAi" id="2158"/>
<dbReference type="Pharos" id="P00740">
    <property type="development level" value="Tchem"/>
</dbReference>
<dbReference type="PRO" id="PR:P00740"/>
<dbReference type="Proteomes" id="UP000005640">
    <property type="component" value="Chromosome X"/>
</dbReference>
<dbReference type="RNAct" id="P00740">
    <property type="molecule type" value="protein"/>
</dbReference>
<dbReference type="Bgee" id="ENSG00000101981">
    <property type="expression patterns" value="Expressed in right lobe of liver and 42 other cell types or tissues"/>
</dbReference>
<dbReference type="GO" id="GO:0062023">
    <property type="term" value="C:collagen-containing extracellular matrix"/>
    <property type="evidence" value="ECO:0007005"/>
    <property type="project" value="BHF-UCL"/>
</dbReference>
<dbReference type="GO" id="GO:0005788">
    <property type="term" value="C:endoplasmic reticulum lumen"/>
    <property type="evidence" value="ECO:0000304"/>
    <property type="project" value="Reactome"/>
</dbReference>
<dbReference type="GO" id="GO:0070062">
    <property type="term" value="C:extracellular exosome"/>
    <property type="evidence" value="ECO:0007005"/>
    <property type="project" value="UniProtKB"/>
</dbReference>
<dbReference type="GO" id="GO:0005576">
    <property type="term" value="C:extracellular region"/>
    <property type="evidence" value="ECO:0000304"/>
    <property type="project" value="Reactome"/>
</dbReference>
<dbReference type="GO" id="GO:0005615">
    <property type="term" value="C:extracellular space"/>
    <property type="evidence" value="ECO:0000314"/>
    <property type="project" value="UniProtKB"/>
</dbReference>
<dbReference type="GO" id="GO:0005796">
    <property type="term" value="C:Golgi lumen"/>
    <property type="evidence" value="ECO:0000304"/>
    <property type="project" value="Reactome"/>
</dbReference>
<dbReference type="GO" id="GO:0005886">
    <property type="term" value="C:plasma membrane"/>
    <property type="evidence" value="ECO:0000304"/>
    <property type="project" value="Reactome"/>
</dbReference>
<dbReference type="GO" id="GO:0005509">
    <property type="term" value="F:calcium ion binding"/>
    <property type="evidence" value="ECO:0000314"/>
    <property type="project" value="UniProtKB"/>
</dbReference>
<dbReference type="GO" id="GO:0004175">
    <property type="term" value="F:endopeptidase activity"/>
    <property type="evidence" value="ECO:0000314"/>
    <property type="project" value="UniProtKB"/>
</dbReference>
<dbReference type="GO" id="GO:0046872">
    <property type="term" value="F:metal ion binding"/>
    <property type="evidence" value="ECO:0000269"/>
    <property type="project" value="DisProt"/>
</dbReference>
<dbReference type="GO" id="GO:0004252">
    <property type="term" value="F:serine-type endopeptidase activity"/>
    <property type="evidence" value="ECO:0000318"/>
    <property type="project" value="GO_Central"/>
</dbReference>
<dbReference type="GO" id="GO:0007596">
    <property type="term" value="P:blood coagulation"/>
    <property type="evidence" value="ECO:0000314"/>
    <property type="project" value="UniProtKB"/>
</dbReference>
<dbReference type="GO" id="GO:0006508">
    <property type="term" value="P:proteolysis"/>
    <property type="evidence" value="ECO:0000314"/>
    <property type="project" value="UniProtKB"/>
</dbReference>
<dbReference type="GO" id="GO:0031638">
    <property type="term" value="P:zymogen activation"/>
    <property type="evidence" value="ECO:0000314"/>
    <property type="project" value="UniProtKB"/>
</dbReference>
<dbReference type="CDD" id="cd00054">
    <property type="entry name" value="EGF_CA"/>
    <property type="match status" value="1"/>
</dbReference>
<dbReference type="CDD" id="cd00190">
    <property type="entry name" value="Tryp_SPc"/>
    <property type="match status" value="1"/>
</dbReference>
<dbReference type="FunFam" id="2.10.25.10:FF:000259">
    <property type="entry name" value="Coagulation factor VII"/>
    <property type="match status" value="1"/>
</dbReference>
<dbReference type="FunFam" id="2.10.25.10:FF:000162">
    <property type="entry name" value="Coagulation factor X (Predicted)"/>
    <property type="match status" value="1"/>
</dbReference>
<dbReference type="FunFam" id="2.40.10.10:FF:000003">
    <property type="entry name" value="Transmembrane serine protease 3"/>
    <property type="match status" value="1"/>
</dbReference>
<dbReference type="FunFam" id="4.10.740.10:FF:000001">
    <property type="entry name" value="vitamin K-dependent protein S"/>
    <property type="match status" value="1"/>
</dbReference>
<dbReference type="Gene3D" id="4.10.740.10">
    <property type="entry name" value="Coagulation Factor IX"/>
    <property type="match status" value="1"/>
</dbReference>
<dbReference type="Gene3D" id="2.10.25.10">
    <property type="entry name" value="Laminin"/>
    <property type="match status" value="2"/>
</dbReference>
<dbReference type="Gene3D" id="2.40.10.10">
    <property type="entry name" value="Trypsin-like serine proteases"/>
    <property type="match status" value="2"/>
</dbReference>
<dbReference type="InterPro" id="IPR017857">
    <property type="entry name" value="Coagulation_fac-like_Gla_dom"/>
</dbReference>
<dbReference type="InterPro" id="IPR001881">
    <property type="entry name" value="EGF-like_Ca-bd_dom"/>
</dbReference>
<dbReference type="InterPro" id="IPR000742">
    <property type="entry name" value="EGF-like_dom"/>
</dbReference>
<dbReference type="InterPro" id="IPR000152">
    <property type="entry name" value="EGF-type_Asp/Asn_hydroxyl_site"/>
</dbReference>
<dbReference type="InterPro" id="IPR018097">
    <property type="entry name" value="EGF_Ca-bd_CS"/>
</dbReference>
<dbReference type="InterPro" id="IPR035972">
    <property type="entry name" value="GLA-like_dom_SF"/>
</dbReference>
<dbReference type="InterPro" id="IPR000294">
    <property type="entry name" value="GLA_domain"/>
</dbReference>
<dbReference type="InterPro" id="IPR012224">
    <property type="entry name" value="Pept_S1A_FX"/>
</dbReference>
<dbReference type="InterPro" id="IPR050442">
    <property type="entry name" value="Peptidase_S1_coag_factors"/>
</dbReference>
<dbReference type="InterPro" id="IPR009003">
    <property type="entry name" value="Peptidase_S1_PA"/>
</dbReference>
<dbReference type="InterPro" id="IPR043504">
    <property type="entry name" value="Peptidase_S1_PA_chymotrypsin"/>
</dbReference>
<dbReference type="InterPro" id="IPR001314">
    <property type="entry name" value="Peptidase_S1A"/>
</dbReference>
<dbReference type="InterPro" id="IPR001254">
    <property type="entry name" value="Trypsin_dom"/>
</dbReference>
<dbReference type="InterPro" id="IPR018114">
    <property type="entry name" value="TRYPSIN_HIS"/>
</dbReference>
<dbReference type="InterPro" id="IPR033116">
    <property type="entry name" value="TRYPSIN_SER"/>
</dbReference>
<dbReference type="PANTHER" id="PTHR24278">
    <property type="entry name" value="COAGULATION FACTOR"/>
    <property type="match status" value="1"/>
</dbReference>
<dbReference type="PANTHER" id="PTHR24278:SF31">
    <property type="entry name" value="COAGULATION FACTOR IX"/>
    <property type="match status" value="1"/>
</dbReference>
<dbReference type="Pfam" id="PF00008">
    <property type="entry name" value="EGF"/>
    <property type="match status" value="1"/>
</dbReference>
<dbReference type="Pfam" id="PF14670">
    <property type="entry name" value="FXa_inhibition"/>
    <property type="match status" value="1"/>
</dbReference>
<dbReference type="Pfam" id="PF00594">
    <property type="entry name" value="Gla"/>
    <property type="match status" value="1"/>
</dbReference>
<dbReference type="Pfam" id="PF00089">
    <property type="entry name" value="Trypsin"/>
    <property type="match status" value="1"/>
</dbReference>
<dbReference type="PIRSF" id="PIRSF001143">
    <property type="entry name" value="Factor_X"/>
    <property type="match status" value="1"/>
</dbReference>
<dbReference type="PRINTS" id="PR00722">
    <property type="entry name" value="CHYMOTRYPSIN"/>
</dbReference>
<dbReference type="PRINTS" id="PR00010">
    <property type="entry name" value="EGFBLOOD"/>
</dbReference>
<dbReference type="PRINTS" id="PR00001">
    <property type="entry name" value="GLABLOOD"/>
</dbReference>
<dbReference type="SMART" id="SM00181">
    <property type="entry name" value="EGF"/>
    <property type="match status" value="2"/>
</dbReference>
<dbReference type="SMART" id="SM00179">
    <property type="entry name" value="EGF_CA"/>
    <property type="match status" value="1"/>
</dbReference>
<dbReference type="SMART" id="SM00069">
    <property type="entry name" value="GLA"/>
    <property type="match status" value="1"/>
</dbReference>
<dbReference type="SMART" id="SM00020">
    <property type="entry name" value="Tryp_SPc"/>
    <property type="match status" value="1"/>
</dbReference>
<dbReference type="SUPFAM" id="SSF57196">
    <property type="entry name" value="EGF/Laminin"/>
    <property type="match status" value="1"/>
</dbReference>
<dbReference type="SUPFAM" id="SSF57630">
    <property type="entry name" value="GLA-domain"/>
    <property type="match status" value="1"/>
</dbReference>
<dbReference type="SUPFAM" id="SSF50494">
    <property type="entry name" value="Trypsin-like serine proteases"/>
    <property type="match status" value="1"/>
</dbReference>
<dbReference type="PROSITE" id="PS00010">
    <property type="entry name" value="ASX_HYDROXYL"/>
    <property type="match status" value="1"/>
</dbReference>
<dbReference type="PROSITE" id="PS00022">
    <property type="entry name" value="EGF_1"/>
    <property type="match status" value="1"/>
</dbReference>
<dbReference type="PROSITE" id="PS01186">
    <property type="entry name" value="EGF_2"/>
    <property type="match status" value="2"/>
</dbReference>
<dbReference type="PROSITE" id="PS50026">
    <property type="entry name" value="EGF_3"/>
    <property type="match status" value="1"/>
</dbReference>
<dbReference type="PROSITE" id="PS01187">
    <property type="entry name" value="EGF_CA"/>
    <property type="match status" value="1"/>
</dbReference>
<dbReference type="PROSITE" id="PS00011">
    <property type="entry name" value="GLA_1"/>
    <property type="match status" value="1"/>
</dbReference>
<dbReference type="PROSITE" id="PS50998">
    <property type="entry name" value="GLA_2"/>
    <property type="match status" value="1"/>
</dbReference>
<dbReference type="PROSITE" id="PS50240">
    <property type="entry name" value="TRYPSIN_DOM"/>
    <property type="match status" value="1"/>
</dbReference>
<dbReference type="PROSITE" id="PS00134">
    <property type="entry name" value="TRYPSIN_HIS"/>
    <property type="match status" value="1"/>
</dbReference>
<dbReference type="PROSITE" id="PS00135">
    <property type="entry name" value="TRYPSIN_SER"/>
    <property type="match status" value="1"/>
</dbReference>
<feature type="signal peptide" evidence="2">
    <location>
        <begin position="1"/>
        <end position="28"/>
    </location>
</feature>
<feature type="propeptide" id="PRO_0000027755" evidence="42">
    <location>
        <begin position="29"/>
        <end position="46"/>
    </location>
</feature>
<feature type="chain" id="PRO_0000027756" description="Coagulation factor IX">
    <location>
        <begin position="47"/>
        <end position="461"/>
    </location>
</feature>
<feature type="chain" id="PRO_0000027757" description="Coagulation factor IXa light chain">
    <location>
        <begin position="47"/>
        <end position="191"/>
    </location>
</feature>
<feature type="propeptide" id="PRO_0000027758" description="Activation peptide">
    <location>
        <begin position="192"/>
        <end position="226"/>
    </location>
</feature>
<feature type="chain" id="PRO_0000027759" description="Coagulation factor IXa heavy chain">
    <location>
        <begin position="227"/>
        <end position="461"/>
    </location>
</feature>
<feature type="domain" description="Gla" evidence="5">
    <location>
        <begin position="47"/>
        <end position="92"/>
    </location>
</feature>
<feature type="domain" description="EGF-like 1; calcium-binding" evidence="3">
    <location>
        <begin position="93"/>
        <end position="129"/>
    </location>
</feature>
<feature type="domain" description="EGF-like 2" evidence="3">
    <location>
        <begin position="130"/>
        <end position="171"/>
    </location>
</feature>
<feature type="domain" description="Peptidase S1" evidence="4">
    <location>
        <begin position="227"/>
        <end position="459"/>
    </location>
</feature>
<feature type="active site" description="Charge relay system" evidence="27 60">
    <location>
        <position position="267"/>
    </location>
</feature>
<feature type="active site" description="Charge relay system" evidence="60">
    <location>
        <position position="315"/>
    </location>
</feature>
<feature type="active site" description="Charge relay system" evidence="27 60">
    <location>
        <position position="411"/>
    </location>
</feature>
<feature type="binding site" evidence="19 86">
    <location>
        <position position="47"/>
    </location>
    <ligand>
        <name>Ca(2+)</name>
        <dbReference type="ChEBI" id="CHEBI:29108"/>
        <label>1</label>
    </ligand>
</feature>
<feature type="binding site" evidence="19 86">
    <location>
        <position position="48"/>
    </location>
    <ligand>
        <name>Ca(2+)</name>
        <dbReference type="ChEBI" id="CHEBI:29108"/>
        <label>2</label>
    </ligand>
</feature>
<feature type="binding site" description="via 4-carboxyglutamate" evidence="83 86">
    <location>
        <position position="53"/>
    </location>
    <ligand>
        <name>Ca(2+)</name>
        <dbReference type="ChEBI" id="CHEBI:29108"/>
        <label>1</label>
    </ligand>
</feature>
<feature type="binding site" description="via 4-carboxyglutamate" evidence="83 86">
    <location>
        <position position="53"/>
    </location>
    <ligand>
        <name>Ca(2+)</name>
        <dbReference type="ChEBI" id="CHEBI:29108"/>
        <label>2</label>
    </ligand>
</feature>
<feature type="binding site" description="via 4-carboxyglutamate" evidence="83 86">
    <location>
        <position position="54"/>
    </location>
    <ligand>
        <name>Ca(2+)</name>
        <dbReference type="ChEBI" id="CHEBI:29108"/>
        <label>2</label>
    </ligand>
</feature>
<feature type="binding site" description="via 4-carboxyglutamate" evidence="83 86">
    <location>
        <position position="54"/>
    </location>
    <ligand>
        <name>Ca(2+)</name>
        <dbReference type="ChEBI" id="CHEBI:29108"/>
        <label>3</label>
    </ligand>
</feature>
<feature type="binding site" description="via 4-carboxyglutamate" evidence="83 86">
    <location>
        <position position="61"/>
    </location>
    <ligand>
        <name>Ca(2+)</name>
        <dbReference type="ChEBI" id="CHEBI:29108"/>
        <label>4</label>
    </ligand>
</feature>
<feature type="binding site" description="via 4-carboxyglutamate" evidence="1">
    <location>
        <position position="61"/>
    </location>
    <ligand>
        <name>Mg(2+)</name>
        <dbReference type="ChEBI" id="CHEBI:18420"/>
        <label>1</label>
    </ligand>
</feature>
<feature type="binding site" description="via 4-carboxyglutamate" evidence="83 86">
    <location>
        <position position="63"/>
    </location>
    <ligand>
        <name>Ca(2+)</name>
        <dbReference type="ChEBI" id="CHEBI:29108"/>
        <label>1</label>
    </ligand>
</feature>
<feature type="binding site" description="via 4-carboxyglutamate" evidence="83 86">
    <location>
        <position position="63"/>
    </location>
    <ligand>
        <name>Ca(2+)</name>
        <dbReference type="ChEBI" id="CHEBI:29108"/>
        <label>2</label>
    </ligand>
</feature>
<feature type="binding site" description="via 4-carboxyglutamate" evidence="83 86">
    <location>
        <position position="63"/>
    </location>
    <ligand>
        <name>Ca(2+)</name>
        <dbReference type="ChEBI" id="CHEBI:29108"/>
        <label>3</label>
    </ligand>
</feature>
<feature type="binding site" description="via 4-carboxyglutamate" evidence="83 86">
    <location>
        <position position="66"/>
    </location>
    <ligand>
        <name>Ca(2+)</name>
        <dbReference type="ChEBI" id="CHEBI:29108"/>
        <label>4</label>
    </ligand>
</feature>
<feature type="binding site" description="via 4-carboxyglutamate" evidence="1">
    <location>
        <position position="66"/>
    </location>
    <ligand>
        <name>Mg(2+)</name>
        <dbReference type="ChEBI" id="CHEBI:18420"/>
        <label>1</label>
    </ligand>
</feature>
<feature type="binding site" description="via 4-carboxyglutamate" evidence="83 86">
    <location>
        <position position="67"/>
    </location>
    <ligand>
        <name>Ca(2+)</name>
        <dbReference type="ChEBI" id="CHEBI:29108"/>
        <label>1</label>
    </ligand>
</feature>
<feature type="binding site" description="via 4-carboxyglutamate" evidence="83 86">
    <location>
        <position position="72"/>
    </location>
    <ligand>
        <name>Ca(2+)</name>
        <dbReference type="ChEBI" id="CHEBI:29108"/>
        <label>5</label>
    </ligand>
</feature>
<feature type="binding site" description="via 4-carboxyglutamate" evidence="1">
    <location>
        <position position="72"/>
    </location>
    <ligand>
        <name>Mg(2+)</name>
        <dbReference type="ChEBI" id="CHEBI:18420"/>
        <label>2</label>
    </ligand>
</feature>
<feature type="binding site" description="via 4-carboxyglutamate" evidence="83 86">
    <location>
        <position position="73"/>
    </location>
    <ligand>
        <name>Ca(2+)</name>
        <dbReference type="ChEBI" id="CHEBI:29108"/>
        <label>2</label>
    </ligand>
</feature>
<feature type="binding site" description="via 4-carboxyglutamate" evidence="83 86">
    <location>
        <position position="73"/>
    </location>
    <ligand>
        <name>Ca(2+)</name>
        <dbReference type="ChEBI" id="CHEBI:29108"/>
        <label>3</label>
    </ligand>
</feature>
<feature type="binding site" description="via 4-carboxyglutamate" evidence="83 86">
    <location>
        <position position="76"/>
    </location>
    <ligand>
        <name>Ca(2+)</name>
        <dbReference type="ChEBI" id="CHEBI:29108"/>
        <label>3</label>
    </ligand>
</feature>
<feature type="binding site" description="via 4-carboxyglutamate" evidence="83 86">
    <location>
        <position position="76"/>
    </location>
    <ligand>
        <name>Ca(2+)</name>
        <dbReference type="ChEBI" id="CHEBI:29108"/>
        <label>5</label>
    </ligand>
</feature>
<feature type="binding site" description="via 4-carboxyglutamate" evidence="1">
    <location>
        <position position="76"/>
    </location>
    <ligand>
        <name>Mg(2+)</name>
        <dbReference type="ChEBI" id="CHEBI:18420"/>
        <label>2</label>
    </ligand>
</feature>
<feature type="binding site" description="via 4-carboxyglutamate" evidence="1">
    <location>
        <position position="82"/>
    </location>
    <ligand>
        <name>Ca(2+)</name>
        <dbReference type="ChEBI" id="CHEBI:29108"/>
        <label>6</label>
    </ligand>
</feature>
<feature type="binding site" description="via 4-carboxyglutamate" evidence="1">
    <location>
        <position position="82"/>
    </location>
    <ligand>
        <name>Mg(2+)</name>
        <dbReference type="ChEBI" id="CHEBI:18420"/>
        <label>3</label>
    </ligand>
</feature>
<feature type="binding site" description="via 4-carboxyglutamate" evidence="1">
    <location>
        <position position="86"/>
    </location>
    <ligand>
        <name>Ca(2+)</name>
        <dbReference type="ChEBI" id="CHEBI:29108"/>
        <label>6</label>
    </ligand>
</feature>
<feature type="binding site" description="via 4-carboxyglutamate" evidence="1">
    <location>
        <position position="86"/>
    </location>
    <ligand>
        <name>Mg(2+)</name>
        <dbReference type="ChEBI" id="CHEBI:18420"/>
        <label>3</label>
    </ligand>
</feature>
<feature type="binding site" evidence="63 84">
    <location>
        <position position="93"/>
    </location>
    <ligand>
        <name>Ca(2+)</name>
        <dbReference type="ChEBI" id="CHEBI:29108"/>
        <label>7</label>
    </ligand>
</feature>
<feature type="binding site" evidence="63 84">
    <location>
        <position position="94"/>
    </location>
    <ligand>
        <name>Ca(2+)</name>
        <dbReference type="ChEBI" id="CHEBI:29108"/>
        <label>7</label>
    </ligand>
</feature>
<feature type="binding site" evidence="63 84">
    <location>
        <position position="96"/>
    </location>
    <ligand>
        <name>Ca(2+)</name>
        <dbReference type="ChEBI" id="CHEBI:29108"/>
        <label>7</label>
    </ligand>
</feature>
<feature type="binding site" evidence="63 84">
    <location>
        <position position="110"/>
    </location>
    <ligand>
        <name>Ca(2+)</name>
        <dbReference type="ChEBI" id="CHEBI:29108"/>
        <label>7</label>
    </ligand>
</feature>
<feature type="binding site" evidence="63 84">
    <location>
        <position position="111"/>
    </location>
    <ligand>
        <name>Ca(2+)</name>
        <dbReference type="ChEBI" id="CHEBI:29108"/>
        <label>7</label>
    </ligand>
</feature>
<feature type="binding site" evidence="8 27 28 29 30 87 88 89 90 91 93 94 95 96">
    <location>
        <position position="281"/>
    </location>
    <ligand>
        <name>Ca(2+)</name>
        <dbReference type="ChEBI" id="CHEBI:29108"/>
        <label>8</label>
    </ligand>
</feature>
<feature type="binding site" evidence="8 27 28 29 30 87 88 89 90 91 93 94 95 96">
    <location>
        <position position="283"/>
    </location>
    <ligand>
        <name>Ca(2+)</name>
        <dbReference type="ChEBI" id="CHEBI:29108"/>
        <label>8</label>
    </ligand>
</feature>
<feature type="binding site" evidence="8 27 28 29 30 87 88 89 90 91 93 94 95 96">
    <location>
        <position position="286"/>
    </location>
    <ligand>
        <name>Ca(2+)</name>
        <dbReference type="ChEBI" id="CHEBI:29108"/>
        <label>8</label>
    </ligand>
</feature>
<feature type="binding site" evidence="8 27 28 29 30 87 88 89 90 91 93 94 95 96">
    <location>
        <position position="288"/>
    </location>
    <ligand>
        <name>Ca(2+)</name>
        <dbReference type="ChEBI" id="CHEBI:29108"/>
        <label>8</label>
    </ligand>
</feature>
<feature type="binding site" evidence="8 27 28 29 30 88 89 90 91 93 94 95 96">
    <location>
        <position position="291"/>
    </location>
    <ligand>
        <name>Ca(2+)</name>
        <dbReference type="ChEBI" id="CHEBI:29108"/>
        <label>8</label>
    </ligand>
</feature>
<feature type="site" description="Cleavage; by factor XIa">
    <location>
        <begin position="191"/>
        <end position="192"/>
    </location>
</feature>
<feature type="site" description="Cleavage; by factor XIa">
    <location>
        <begin position="226"/>
        <end position="227"/>
    </location>
</feature>
<feature type="modified residue" description="4-carboxyglutamate" evidence="1 5">
    <location>
        <position position="53"/>
    </location>
</feature>
<feature type="modified residue" description="4-carboxyglutamate" evidence="1 5">
    <location>
        <position position="54"/>
    </location>
</feature>
<feature type="modified residue" description="4-carboxyglutamate" evidence="1 5">
    <location>
        <position position="61"/>
    </location>
</feature>
<feature type="modified residue" description="4-carboxyglutamate" evidence="1 5">
    <location>
        <position position="63"/>
    </location>
</feature>
<feature type="modified residue" description="4-carboxyglutamate" evidence="1 5">
    <location>
        <position position="66"/>
    </location>
</feature>
<feature type="modified residue" description="4-carboxyglutamate" evidence="1 5">
    <location>
        <position position="67"/>
    </location>
</feature>
<feature type="modified residue" description="4-carboxyglutamate" evidence="1 5">
    <location>
        <position position="72"/>
    </location>
</feature>
<feature type="modified residue" description="4-carboxyglutamate" evidence="1 5">
    <location>
        <position position="73"/>
    </location>
</feature>
<feature type="modified residue" description="4-carboxyglutamate" evidence="1 5">
    <location>
        <position position="76"/>
    </location>
</feature>
<feature type="modified residue" description="4-carboxyglutamate" evidence="1 5">
    <location>
        <position position="79"/>
    </location>
</feature>
<feature type="modified residue" description="4-carboxyglutamate" evidence="1 5">
    <location>
        <position position="82"/>
    </location>
</feature>
<feature type="modified residue" description="4-carboxyglutamate" evidence="1 5">
    <location>
        <position position="86"/>
    </location>
</feature>
<feature type="modified residue" description="(3R)-3-hydroxyaspartate" evidence="62">
    <location>
        <position position="110"/>
    </location>
</feature>
<feature type="modified residue" description="Phosphoserine" evidence="79">
    <location>
        <position position="114"/>
    </location>
</feature>
<feature type="modified residue" description="Sulfotyrosine" evidence="12">
    <location>
        <position position="201"/>
    </location>
</feature>
<feature type="modified residue" description="Phosphoserine" evidence="12 40">
    <location>
        <position position="204"/>
    </location>
</feature>
<feature type="modified residue" description="Phosphothreonine; alternate" evidence="40">
    <location>
        <position position="205"/>
    </location>
</feature>
<feature type="glycosylation site" description="O-linked (GalNAc...) threonine" evidence="40">
    <location>
        <position position="85"/>
    </location>
</feature>
<feature type="glycosylation site" id="CAR_000009" description="O-linked (Glc...) serine" evidence="31 38 40">
    <location>
        <position position="99"/>
    </location>
</feature>
<feature type="glycosylation site" id="CAR_000010" description="O-linked (Fuc...) serine" evidence="20 40">
    <location>
        <position position="107"/>
    </location>
</feature>
<feature type="glycosylation site" description="N-linked (GlcNAc...) asparagine" evidence="2">
    <location>
        <position position="203"/>
    </location>
</feature>
<feature type="glycosylation site" description="O-linked (GalNAc...) threonine; alternate" evidence="40 67">
    <location>
        <position position="205"/>
    </location>
</feature>
<feature type="glycosylation site" description="N-linked (GlcNAc...) asparagine" evidence="2">
    <location>
        <position position="213"/>
    </location>
</feature>
<feature type="glycosylation site" description="O-linked (GalNAc...) threonine" evidence="40 67">
    <location>
        <position position="215"/>
    </location>
</feature>
<feature type="glycosylation site" description="O-linked (GalNAc...) threonine" evidence="40">
    <location>
        <position position="225"/>
    </location>
</feature>
<feature type="disulfide bond" evidence="1">
    <location>
        <begin position="64"/>
        <end position="69"/>
    </location>
</feature>
<feature type="disulfide bond" evidence="16 63 84 85">
    <location>
        <begin position="97"/>
        <end position="108"/>
    </location>
</feature>
<feature type="disulfide bond" evidence="16 63 84 85">
    <location>
        <begin position="102"/>
        <end position="117"/>
    </location>
</feature>
<feature type="disulfide bond" evidence="16 63 84 85">
    <location>
        <begin position="119"/>
        <end position="128"/>
    </location>
</feature>
<feature type="disulfide bond" evidence="27 28 29 30 87 88 89 90 91 92 93 94 95 96">
    <location>
        <begin position="134"/>
        <end position="145"/>
    </location>
</feature>
<feature type="disulfide bond" evidence="27 28 29 30 87 88 89 90 91 92 93 94 95 96">
    <location>
        <begin position="141"/>
        <end position="155"/>
    </location>
</feature>
<feature type="disulfide bond" evidence="27 28 29 30 87 88 89 90 91 92 93 94 95 96">
    <location>
        <begin position="157"/>
        <end position="170"/>
    </location>
</feature>
<feature type="disulfide bond" description="Interchain (between light and heavy chains)" evidence="27 28 29 30 87 88 89 90 91 92 93 94 95 96">
    <location>
        <begin position="178"/>
        <end position="335"/>
    </location>
</feature>
<feature type="disulfide bond" evidence="27 28 29 30 87 88 89 90 91 92 93 94 95 96">
    <location>
        <begin position="252"/>
        <end position="268"/>
    </location>
</feature>
<feature type="disulfide bond" evidence="27 28 29 30 87 88 89 90 91 92 93 94 95 96">
    <location>
        <begin position="382"/>
        <end position="396"/>
    </location>
</feature>
<feature type="disulfide bond" evidence="27 28 29 30 87 88 89 90 91 92 93 94 95 96">
    <location>
        <begin position="407"/>
        <end position="435"/>
    </location>
</feature>
<feature type="splice variant" id="VSP_047689" description="In isoform 2." evidence="82">
    <location>
        <begin position="93"/>
        <end position="130"/>
    </location>
</feature>
<feature type="sequence variant" id="VAR_006520" description="In dbSNP:rs150190385." evidence="48">
    <original>I</original>
    <variation>F</variation>
    <location>
        <position position="7"/>
    </location>
</feature>
<feature type="sequence variant" id="VAR_006521" description="In HEMB; severe; UK 22." evidence="64">
    <original>I</original>
    <variation>N</variation>
    <location>
        <position position="17"/>
    </location>
</feature>
<feature type="sequence variant" id="VAR_073975" description="In HEMB; uncertain significance; decreased protein abundance; decreased function in blood coagulation." evidence="39">
    <original>L</original>
    <variation>S</variation>
    <location>
        <position position="20"/>
    </location>
</feature>
<feature type="sequence variant" id="VAR_006522" description="In HEMB; moderate; HB130; dbSNP:rs387906481." evidence="64">
    <original>C</original>
    <variation>R</variation>
    <location>
        <position position="28"/>
    </location>
</feature>
<feature type="sequence variant" id="VAR_017343" description="In HEMB; decreased protein abundance; decreased function in blood coagulation." evidence="14 39">
    <original>C</original>
    <variation>Y</variation>
    <location>
        <position position="28"/>
    </location>
</feature>
<feature type="sequence variant" id="VAR_006523" description="In HEMB; dbSNP:rs1603263395." evidence="22">
    <original>V</original>
    <variation>I</variation>
    <location>
        <position position="30"/>
    </location>
</feature>
<feature type="sequence variant" id="VAR_017307" description="In WARFS; reduced affinity of the glutamate carboxylase for the factor IX precursor; 4.4-fold decreased in the EC(50) for warfarin; dbSNP:rs367569299." evidence="50 72 75">
    <original>A</original>
    <variation>T</variation>
    <location>
        <position position="37"/>
    </location>
</feature>
<feature type="sequence variant" id="VAR_083981" description="In WARFS; 2.5-fold decreased in the EC(50) for warfarin; dbSNP:rs1327097914." evidence="50 75">
    <original>A</original>
    <variation>V</variation>
    <location>
        <position position="37"/>
    </location>
</feature>
<feature type="sequence variant" id="VAR_006525" description="In HEMB; severe; Bendorf, Beuten, Gleiwitz; impairs removal of propeptide; dbSNP:rs1275708479." evidence="14 73">
    <original>R</original>
    <variation>L</variation>
    <location>
        <position position="43"/>
    </location>
</feature>
<feature type="sequence variant" id="VAR_006524" description="In HEMB; severe; San Dimas, Oxford-3, Strasbourg-2; impairs removal of propeptide; dbSNP:rs1275708479." evidence="14 46 52 70 73 78">
    <original>R</original>
    <variation>Q</variation>
    <location>
        <position position="43"/>
    </location>
</feature>
<feature type="sequence variant" id="VAR_006526" description="In HEMB; severe; Boxtel, Heiden, Lienen; impairs removal of propeptide; dbSNP:rs1603264205." evidence="15 73 78">
    <original>R</original>
    <variation>W</variation>
    <location>
        <position position="43"/>
    </location>
</feature>
<feature type="sequence variant" id="VAR_006527" description="In HEMB; severe; Seattle E." evidence="64">
    <original>K</original>
    <variation>N</variation>
    <location>
        <position position="45"/>
    </location>
</feature>
<feature type="sequence variant" id="VAR_006528" description="In HEMB; severe; Cambridge; impaired processing of the propeptide; impaired gamma-carboxylation; decreased protein abundance; loss of function in blood coagulation." evidence="39">
    <original>R</original>
    <variation>S</variation>
    <location>
        <position position="46"/>
    </location>
</feature>
<feature type="sequence variant" id="VAR_006529" description="In HEMB; severe." evidence="78">
    <original>R</original>
    <variation>T</variation>
    <location>
        <position position="46"/>
    </location>
</feature>
<feature type="sequence variant" id="VAR_006530" description="In HEMB; severe; Calgary-16." evidence="64">
    <original>N</original>
    <variation>I</variation>
    <location>
        <position position="48"/>
    </location>
</feature>
<feature type="sequence variant" id="VAR_006531" description="In HEMB." evidence="6">
    <original>S</original>
    <variation>P</variation>
    <location>
        <position position="49"/>
    </location>
</feature>
<feature type="sequence variant" id="VAR_017344" description="In HEMB; severe; Gla mutant." evidence="14">
    <original>L</original>
    <variation>S</variation>
    <location>
        <position position="52"/>
    </location>
</feature>
<feature type="sequence variant" id="VAR_006532" description="In HEMB; severe; Oxford-B2; Gla mutant." evidence="64">
    <original>E</original>
    <variation>A</variation>
    <location>
        <position position="53"/>
    </location>
</feature>
<feature type="sequence variant" id="VAR_073976" description="In HEMB; uncertain significance; no effect on protein abundance; loss of function in blood coagulation." evidence="39">
    <original>E</original>
    <variation>D</variation>
    <location>
        <position position="54"/>
    </location>
</feature>
<feature type="sequence variant" id="VAR_006533" description="In HEMB; severe; HB151; Gla mutant." evidence="64">
    <original>E</original>
    <variation>G</variation>
    <location>
        <position position="54"/>
    </location>
</feature>
<feature type="sequence variant" id="VAR_006534" description="In HEMB." evidence="64">
    <original>F</original>
    <variation>C</variation>
    <location>
        <position position="55"/>
    </location>
</feature>
<feature type="sequence variant" id="VAR_006535" description="In HEMB; severe; Hong Kong-1; dbSNP:rs1927495541." evidence="64">
    <original>G</original>
    <variation>A</variation>
    <location>
        <position position="58"/>
    </location>
</feature>
<feature type="sequence variant" id="VAR_073977" description="In HEMB; uncertain significance; no effect on protein abundance; loss of function in blood coagulation; dbSNP:rs1927495541." evidence="39">
    <original>G</original>
    <variation>E</variation>
    <location>
        <position position="58"/>
    </location>
</feature>
<feature type="sequence variant" id="VAR_006536" description="In HEMB; severe; Los Angeles-4; dbSNP:rs1927495402." evidence="64">
    <original>G</original>
    <variation>R</variation>
    <location>
        <position position="58"/>
    </location>
</feature>
<feature type="sequence variant" id="VAR_006537" description="In HEMB; severe.">
    <location>
        <begin position="62"/>
        <end position="63"/>
    </location>
</feature>
<feature type="sequence variant" id="VAR_006538" description="In HEMB; moderate." evidence="64">
    <original>E</original>
    <variation>V</variation>
    <location>
        <position position="66"/>
    </location>
</feature>
<feature type="sequence variant" id="VAR_006539" description="In HEMB; severe; Nagoya-4; Gla mutant; dbSNP:rs1410080079." evidence="64">
    <original>E</original>
    <variation>K</variation>
    <location>
        <position position="67"/>
    </location>
</feature>
<feature type="sequence variant" id="VAR_006540" description="In HEMB; severe; dbSNP:rs1927498407." evidence="17">
    <original>F</original>
    <variation>S</variation>
    <location>
        <position position="71"/>
    </location>
</feature>
<feature type="sequence variant" id="VAR_006541" description="In HEMB; severe; Seattle-3; Gla mutant; dbSNP:rs137852225." evidence="37">
    <original>E</original>
    <variation>K</variation>
    <location>
        <position position="73"/>
    </location>
</feature>
<feature type="sequence variant" id="VAR_006542" description="In HEMB; severe; Chongqing; Gla mutant; dbSNP:rs137852226." evidence="35">
    <original>E</original>
    <variation>V</variation>
    <location>
        <position position="73"/>
    </location>
</feature>
<feature type="sequence variant" id="VAR_017308" description="In HEMB; mild; dbSNP:rs137852228." evidence="48">
    <original>R</original>
    <variation>Q</variation>
    <location>
        <position position="75"/>
    </location>
</feature>
<feature type="sequence variant" id="VAR_017309" description="In HEMB; dbSNP:rs137852229." evidence="48">
    <original>E</original>
    <variation>D</variation>
    <location>
        <position position="79"/>
    </location>
</feature>
<feature type="sequence variant" id="VAR_017345" description="In HEMB; decreased protein abundance; loss of function in blood coagulation." evidence="15 39">
    <original>T</original>
    <variation>R</variation>
    <location>
        <position position="84"/>
    </location>
</feature>
<feature type="sequence variant" id="VAR_006543" description="In HEMB; moderate; dbSNP:rs1927507731." evidence="64">
    <original>Y</original>
    <variation>C</variation>
    <location>
        <position position="91"/>
    </location>
</feature>
<feature type="sequence variant" id="VAR_006544" description="In HEMB; moderate; Alabama; dbSNP:rs137852230." evidence="56">
    <original>D</original>
    <variation>G</variation>
    <location>
        <position position="93"/>
    </location>
</feature>
<feature type="sequence variant" id="VAR_006545" description="In HEMB; severe; New London; dbSNP:rs137852231." evidence="34">
    <original>Q</original>
    <variation>P</variation>
    <location>
        <position position="96"/>
    </location>
</feature>
<feature type="sequence variant" id="VAR_006546" description="In HEMB." evidence="6">
    <original>C</original>
    <variation>S</variation>
    <location>
        <position position="97"/>
    </location>
</feature>
<feature type="sequence variant" id="VAR_006547" description="In HEMB." evidence="6">
    <original>P</original>
    <variation>R</variation>
    <location>
        <position position="101"/>
    </location>
</feature>
<feature type="sequence variant" id="VAR_006548" description="In HEMB; severe; Basel; dbSNP:rs1603264719." evidence="64">
    <original>C</original>
    <variation>R</variation>
    <location>
        <position position="102"/>
    </location>
</feature>
<feature type="sequence variant" id="VAR_017346" description="In HEMB; dbSNP:rs1927590999." evidence="14">
    <original>G</original>
    <variation>D</variation>
    <location>
        <position position="106"/>
    </location>
</feature>
<feature type="sequence variant" id="VAR_006549" description="In HEMB; mild; Durham; dbSNP:rs137852233." evidence="37 78">
    <original>G</original>
    <variation>S</variation>
    <location>
        <position position="106"/>
    </location>
</feature>
<feature type="sequence variant" id="VAR_006550" description="In HEMB." evidence="6">
    <original>C</original>
    <variation>S</variation>
    <location>
        <position position="108"/>
    </location>
</feature>
<feature type="sequence variant" id="VAR_006551" description="In HEMB; severe; Oxford-D1; dbSNP:rs137852274." evidence="64">
    <original>D</original>
    <variation>N</variation>
    <location>
        <position position="110"/>
    </location>
</feature>
<feature type="sequence variant" id="VAR_006552" description="In HEMB." evidence="6">
    <original>I</original>
    <variation>S</variation>
    <location>
        <position position="112"/>
    </location>
</feature>
<feature type="sequence variant" id="VAR_006553" description="In HEMB; mild." evidence="74">
    <original>N</original>
    <variation>K</variation>
    <location>
        <position position="113"/>
    </location>
</feature>
<feature type="sequence variant" id="VAR_006554" description="In HEMB; severe; dbSNP:rs1603264727." evidence="78">
    <original>Y</original>
    <variation>C</variation>
    <location>
        <position position="115"/>
    </location>
</feature>
<feature type="sequence variant" id="VAR_006555" description="In HEMB; severe.">
    <original>C</original>
    <variation>F</variation>
    <location>
        <position position="119"/>
    </location>
</feature>
<feature type="sequence variant" id="VAR_006556" description="In HEMB; Iran." evidence="76">
    <original>C</original>
    <variation>R</variation>
    <location>
        <position position="119"/>
    </location>
</feature>
<feature type="sequence variant" id="VAR_017347" description="In HEMB; dbSNP:rs1927593025." evidence="14">
    <original>E</original>
    <variation>K</variation>
    <location>
        <position position="124"/>
    </location>
</feature>
<feature type="sequence variant" id="VAR_006557" description="In HEMB." evidence="6">
    <original>G</original>
    <variation>E</variation>
    <location>
        <position position="125"/>
    </location>
</feature>
<feature type="sequence variant" id="VAR_017348" description="In HEMB; dbSNP:rs1927593140." evidence="15">
    <original>G</original>
    <variation>R</variation>
    <location>
        <position position="125"/>
    </location>
</feature>
<feature type="sequence variant" id="VAR_006558" description="In HEMB." evidence="15">
    <original>G</original>
    <variation>V</variation>
    <location>
        <position position="125"/>
    </location>
</feature>
<feature type="sequence variant" id="VAR_006559" description="In HEMB.">
    <location>
        <begin position="129"/>
        <end position="130"/>
    </location>
</feature>
<feature type="sequence variant" id="VAR_017349" description="In HEMB." evidence="14">
    <original>C</original>
    <variation>Y</variation>
    <location>
        <position position="134"/>
    </location>
</feature>
<feature type="sequence variant" id="VAR_006560" description="In HEMB; mild; dbSNP:rs1603265481." evidence="64">
    <original>I</original>
    <variation>T</variation>
    <location>
        <position position="136"/>
    </location>
</feature>
<feature type="sequence variant" id="VAR_073978" description="In HEMB; uncertain significance; decreased protein abundance; decreased function in blood coagulation." evidence="39">
    <original>N</original>
    <variation>H</variation>
    <location>
        <position position="138"/>
    </location>
</feature>
<feature type="sequence variant" id="VAR_006561" description="In HEMB; severe; dbSNP:rs1216516070." evidence="64">
    <original>G</original>
    <variation>D</variation>
    <location>
        <position position="139"/>
    </location>
</feature>
<feature type="sequence variant" id="VAR_006562" description="In HEMB." evidence="64">
    <original>G</original>
    <variation>S</variation>
    <location>
        <position position="139"/>
    </location>
</feature>
<feature type="sequence variant" id="VAR_006563" description="In HEMB; severe; dbSNP:rs1330705989." evidence="78">
    <original>C</original>
    <variation>F</variation>
    <location>
        <position position="155"/>
    </location>
</feature>
<feature type="sequence variant" id="VAR_006564" description="In HEMB; mild." evidence="64">
    <original>G</original>
    <variation>E</variation>
    <location>
        <position position="160"/>
    </location>
</feature>
<feature type="sequence variant" id="VAR_006565" description="In HEMB; mild." evidence="64">
    <original>Q</original>
    <variation>H</variation>
    <location>
        <position position="167"/>
    </location>
</feature>
<feature type="sequence variant" id="VAR_017350" description="In HEMB." evidence="11">
    <original>S</original>
    <variation>C</variation>
    <location>
        <position position="169"/>
    </location>
</feature>
<feature type="sequence variant" id="VAR_017351" description="In HEMB." evidence="15">
    <original>C</original>
    <variation>F</variation>
    <location>
        <position position="170"/>
    </location>
</feature>
<feature type="sequence variant" id="VAR_006566" description="In HEMB; dbSNP:rs2148362390." evidence="64">
    <original>C</original>
    <variation>R</variation>
    <location>
        <position position="178"/>
    </location>
</feature>
<feature type="sequence variant" id="VAR_006567" description="In HEMB; severe." evidence="71">
    <original>C</original>
    <variation>W</variation>
    <location>
        <position position="178"/>
    </location>
</feature>
<feature type="sequence variant" id="VAR_006569" description="In HEMB; moderate; Albuquerque, Cardiff-1; dbSNP:rs137852237." evidence="49">
    <original>R</original>
    <variation>C</variation>
    <location>
        <position position="191"/>
    </location>
</feature>
<feature type="sequence variant" id="VAR_006568" description="In HEMB; moderate; Chapel-Hill, Chicago-2; dbSNP:rs137852238." evidence="61 66">
    <original>R</original>
    <variation>H</variation>
    <location>
        <position position="191"/>
    </location>
</feature>
<feature type="sequence variant" id="VAR_011773" description="In dbSNP:rs6048." evidence="7 41 51 57 58">
    <original>T</original>
    <variation>A</variation>
    <location>
        <position position="194"/>
    </location>
</feature>
<feature type="sequence variant" id="VAR_006571" description="In HEMB; severe; Madrid." evidence="14 66">
    <original>R</original>
    <variation>G</variation>
    <location>
        <position position="226"/>
    </location>
</feature>
<feature type="sequence variant" id="VAR_006572" description="In HEMB; severe; Hilo and Novara; no effect on protein abundance; loss of function in blood coagulation; dbSNP:rs137852241." evidence="14 32 39 43">
    <original>R</original>
    <variation>Q</variation>
    <location>
        <position position="226"/>
    </location>
</feature>
<feature type="sequence variant" id="VAR_006570" description="In HEMB; severe; Nagoya-1, Dernbach, Deventer, Idaho; dbSNP:rs137852240." evidence="14 32 42">
    <original>R</original>
    <variation>W</variation>
    <location>
        <position position="226"/>
    </location>
</feature>
<feature type="sequence variant" id="VAR_006573" description="In HEMB; mild." evidence="64">
    <original>V</original>
    <variation>D</variation>
    <location>
        <position position="227"/>
    </location>
</feature>
<feature type="sequence variant" id="VAR_017310" description="In HEMB; Milano; dbSNP:rs137852242." evidence="32">
    <original>V</original>
    <variation>F</variation>
    <location>
        <position position="227"/>
    </location>
</feature>
<feature type="sequence variant" id="VAR_017311" description="In HEMB; severe; Kashihara; dbSNP:rs137852243." evidence="47">
    <original>V</original>
    <variation>F</variation>
    <location>
        <position position="228"/>
    </location>
</feature>
<feature type="sequence variant" id="VAR_006574" description="In HEMB; mild; Cardiff-2; dbSNP:rs137852243." evidence="36">
    <original>V</original>
    <variation>L</variation>
    <location>
        <position position="228"/>
    </location>
</feature>
<feature type="sequence variant" id="VAR_006575" description="In HEMB; dbSNP:rs1182648920." evidence="41">
    <original>Q</original>
    <variation>H</variation>
    <location>
        <position position="241"/>
    </location>
</feature>
<feature type="sequence variant" id="VAR_017352" description="In HEMB." evidence="14">
    <original>Q</original>
    <variation>K</variation>
    <location>
        <position position="241"/>
    </location>
</feature>
<feature type="sequence variant" id="VAR_017312" description="In HEMB; severe; dbSNP:rs267606792." evidence="21">
    <original>C</original>
    <variation>S</variation>
    <location>
        <position position="252"/>
    </location>
</feature>
<feature type="sequence variant" id="VAR_017353" description="In HEMB." evidence="14">
    <original>C</original>
    <variation>Y</variation>
    <location>
        <position position="252"/>
    </location>
</feature>
<feature type="sequence variant" id="VAR_006576" description="In HEMB; severe." evidence="64">
    <original>G</original>
    <variation>E</variation>
    <location>
        <position position="253"/>
    </location>
</feature>
<feature type="sequence variant" id="VAR_006577" description="In HEMB; severe; Luanda; dbSNP:rs1603267181." evidence="69">
    <original>G</original>
    <variation>R</variation>
    <location>
        <position position="253"/>
    </location>
</feature>
<feature type="sequence variant" id="VAR_006578" description="In HEMB; mild." evidence="64">
    <original>A</original>
    <variation>T</variation>
    <location>
        <position position="265"/>
    </location>
</feature>
<feature type="sequence variant" id="VAR_017313" description="In HEMB; moderate; dbSNP:rs137852246." evidence="48">
    <original>C</original>
    <variation>W</variation>
    <location>
        <position position="268"/>
    </location>
</feature>
<feature type="sequence variant" id="VAR_006579" description="In HEMB; mild; dbSNP:rs137852247." evidence="48 66">
    <original>A</original>
    <variation>T</variation>
    <location>
        <position position="279"/>
    </location>
</feature>
<feature type="sequence variant" id="VAR_006580" description="In HEMB; severe." evidence="71">
    <original>N</original>
    <variation>D</variation>
    <location>
        <position position="283"/>
    </location>
</feature>
<feature type="sequence variant" id="VAR_073979" description="In HEMB; severe; decreased protein abundance; loss of function in blood coagulation." evidence="39">
    <location>
        <position position="284"/>
    </location>
</feature>
<feature type="sequence variant" id="VAR_006581" description="In HEMB; severe.">
    <location>
        <position position="286"/>
    </location>
</feature>
<feature type="sequence variant" id="VAR_017314" description="In HEMB; Monschau; dbSNP:rs137852279." evidence="18">
    <original>E</original>
    <variation>V</variation>
    <location>
        <position position="291"/>
    </location>
</feature>
<feature type="sequence variant" id="VAR_006582" description="In HEMB; severe." evidence="64">
    <original>R</original>
    <variation>G</variation>
    <location>
        <position position="294"/>
    </location>
</feature>
<feature type="sequence variant" id="VAR_006583" description="In HEMB; mild to moderate; Dreihacken, Penafiel and Seattle-4; dbSNP:rs137852249." evidence="14 18 37 65 69">
    <original>R</original>
    <variation>Q</variation>
    <location>
        <position position="294"/>
    </location>
</feature>
<feature type="sequence variant" id="VAR_073980" description="In HEMB; uncertain significance; decreased protein abundance; decreased function in blood coagulation; dbSNP:rs1928103837." evidence="39">
    <original>V</original>
    <variation>M</variation>
    <location>
        <position position="296"/>
    </location>
</feature>
<feature type="sequence variant" id="VAR_006584" description="In HEMB." evidence="15">
    <original>H</original>
    <variation>R</variation>
    <location>
        <position position="302"/>
    </location>
</feature>
<feature type="sequence variant" id="VAR_017315" description="In HEMB; mild; dbSNP:rs137852251." evidence="48">
    <original>N</original>
    <variation>S</variation>
    <location>
        <position position="306"/>
    </location>
</feature>
<feature type="sequence variant" id="VAR_006585" description="In HEMB." evidence="14">
    <original>I</original>
    <variation>F</variation>
    <location>
        <position position="316"/>
    </location>
</feature>
<feature type="sequence variant" id="VAR_017354" description="In HEMB; dbSNP:rs1222227572." evidence="14">
    <original>L</original>
    <variation>R</variation>
    <location>
        <position position="318"/>
    </location>
</feature>
<feature type="sequence variant" id="VAR_006586" description="In HEMB; severe." evidence="71">
    <original>L</original>
    <variation>Q</variation>
    <location>
        <position position="321"/>
    </location>
</feature>
<feature type="sequence variant" id="VAR_073981" description="In HEMB; uncertain significance; decreased protein abundance; decreased function in blood coagulation." evidence="39">
    <original>N</original>
    <variation>K</variation>
    <location>
        <position position="328"/>
    </location>
</feature>
<feature type="sequence variant" id="VAR_073982" description="In HEMB; moderate; decreased protein abundance; decreased function in blood coagulation." evidence="39">
    <original>N</original>
    <variation>Y</variation>
    <location>
        <position position="328"/>
    </location>
</feature>
<feature type="sequence variant" id="VAR_006587" description="In HEMB; severe." evidence="64">
    <original>P</original>
    <variation>H</variation>
    <location>
        <position position="333"/>
    </location>
</feature>
<feature type="sequence variant" id="VAR_017355" description="In HEMB." evidence="11">
    <original>P</original>
    <variation>T</variation>
    <location>
        <position position="333"/>
    </location>
</feature>
<feature type="sequence variant" id="VAR_006588" description="In HEMB; mild; dbSNP:rs137852254." evidence="64">
    <original>T</original>
    <variation>K</variation>
    <location>
        <position position="342"/>
    </location>
</feature>
<feature type="sequence variant" id="VAR_006589" description="In HEMB; moderate; dbSNP:rs137852254." evidence="15 48 74">
    <original>T</original>
    <variation>M</variation>
    <location>
        <position position="342"/>
    </location>
</feature>
<feature type="sequence variant" id="VAR_017356" description="In HEMB." evidence="15">
    <original>I</original>
    <variation>L</variation>
    <location>
        <position position="344"/>
    </location>
</feature>
<feature type="sequence variant" id="VAR_006590" description="In HEMB." evidence="64">
    <original>G</original>
    <variation>D</variation>
    <location>
        <position position="351"/>
    </location>
</feature>
<feature type="sequence variant" id="VAR_006591" description="In HEMB; severe." evidence="64">
    <original>W</original>
    <variation>C</variation>
    <location>
        <position position="356"/>
    </location>
</feature>
<feature type="sequence variant" id="VAR_006592" description="In HEMB; severe; Amagasaki; dbSNP:rs137852275." evidence="25">
    <original>G</original>
    <variation>E</variation>
    <location>
        <position position="357"/>
    </location>
</feature>
<feature type="sequence variant" id="VAR_017316" description="In HEMB; dbSNP:rs137852257." evidence="48">
    <original>G</original>
    <variation>R</variation>
    <location>
        <position position="357"/>
    </location>
</feature>
<feature type="sequence variant" id="VAR_006593" description="In HEMB; moderate." evidence="64">
    <original>K</original>
    <variation>E</variation>
    <location>
        <position position="362"/>
    </location>
</feature>
<feature type="sequence variant" id="VAR_006594" description="In HEMB." evidence="6">
    <original>G</original>
    <variation>W</variation>
    <location>
        <position position="363"/>
    </location>
</feature>
<feature type="sequence variant" id="VAR_006595" description="In HEMB; dbSNP:rs1928115979." evidence="64">
    <original>A</original>
    <variation>D</variation>
    <location>
        <position position="366"/>
    </location>
</feature>
<feature type="sequence variant" id="VAR_006596" description="In HEMB; moderate; dbSNP:rs137852258." evidence="14">
    <original>R</original>
    <variation>G</variation>
    <location>
        <position position="379"/>
    </location>
</feature>
<feature type="sequence variant" id="VAR_006597" description="In HEMB; severe; Iceland-1, London and Sesimbra; dbSNP:rs137852259." evidence="66 69 78">
    <original>R</original>
    <variation>Q</variation>
    <location>
        <position position="379"/>
    </location>
</feature>
<feature type="sequence variant" id="VAR_006598" description="In HEMB; dbSNP:rs1303221289." evidence="64">
    <original>C</original>
    <variation>Y</variation>
    <location>
        <position position="382"/>
    </location>
</feature>
<feature type="sequence variant" id="VAR_017358" description="In HEMB; dbSNP:rs1677128088." evidence="14">
    <original>L</original>
    <variation>F</variation>
    <location>
        <position position="383"/>
    </location>
</feature>
<feature type="sequence variant" id="VAR_017357" description="In HEMB." evidence="14">
    <original>L</original>
    <variation>I</variation>
    <location>
        <position position="383"/>
    </location>
</feature>
<feature type="sequence variant" id="VAR_062999" description="In THPH8; factor IX Padua; higher specific activity than wild-type; dbSNP:rs137852283." evidence="26">
    <original>R</original>
    <variation>L</variation>
    <location>
        <position position="384"/>
    </location>
</feature>
<feature type="sequence variant" id="VAR_006599" description="In HEMB; mild." evidence="78">
    <original>K</original>
    <variation>E</variation>
    <location>
        <position position="387"/>
    </location>
</feature>
<feature type="sequence variant" id="VAR_006600" description="In HEMB; severe; dbSNP:rs1287011273." evidence="64">
    <original>I</original>
    <variation>F</variation>
    <location>
        <position position="390"/>
    </location>
</feature>
<feature type="sequence variant" id="VAR_006601" description="In HEMB." evidence="64">
    <original>M</original>
    <variation>K</variation>
    <location>
        <position position="394"/>
    </location>
</feature>
<feature type="sequence variant" id="VAR_017359" description="In HEMB; dbSNP:rs1175050951." evidence="14">
    <original>F</original>
    <variation>I</variation>
    <location>
        <position position="395"/>
    </location>
</feature>
<feature type="sequence variant" id="VAR_017360" description="In HEMB; dbSNP:rs1175050951." evidence="15">
    <original>F</original>
    <variation>L</variation>
    <location>
        <position position="395"/>
    </location>
</feature>
<feature type="sequence variant" id="VAR_017361" description="In HEMB." evidence="14">
    <original>C</original>
    <variation>F</variation>
    <location>
        <position position="396"/>
    </location>
</feature>
<feature type="sequence variant" id="VAR_006602" description="In HEMB; severe; dbSNP:rs137852273." evidence="6">
    <original>C</original>
    <variation>S</variation>
    <location>
        <position position="396"/>
    </location>
</feature>
<feature type="sequence variant" id="VAR_017317" description="In HEMB; mild; Hong Kong-11; dbSNP:rs137852281." evidence="77">
    <original>A</original>
    <variation>P</variation>
    <location>
        <position position="397"/>
    </location>
</feature>
<feature type="sequence variant" id="VAR_006603" description="In HEMB." evidence="6">
    <original>R</original>
    <variation>T</variation>
    <location>
        <position position="404"/>
    </location>
</feature>
<feature type="sequence variant" id="VAR_017362" description="In HEMB; dbSNP:rs1465724732." evidence="14">
    <original>C</original>
    <variation>R</variation>
    <location>
        <position position="407"/>
    </location>
</feature>
<feature type="sequence variant" id="VAR_006604" description="In HEMB; severe." evidence="71">
    <original>C</original>
    <variation>S</variation>
    <location>
        <position position="407"/>
    </location>
</feature>
<feature type="sequence variant" id="VAR_017318" description="In HEMB; Mechtal; dbSNP:rs137852278." evidence="18">
    <original>D</original>
    <variation>H</variation>
    <location>
        <position position="410"/>
    </location>
</feature>
<feature type="sequence variant" id="VAR_017320" description="In HEMB; Varel; dbSNP:rs137852277." evidence="18">
    <original>S</original>
    <variation>G</variation>
    <location>
        <position position="411"/>
    </location>
</feature>
<feature type="sequence variant" id="VAR_017319" description="In HEMB; Schmallenberg; dbSNP:rs137852276." evidence="18">
    <original>S</original>
    <variation>I</variation>
    <location>
        <position position="411"/>
    </location>
</feature>
<feature type="sequence variant" id="VAR_017363" description="In HEMB; dbSNP:rs1233706534." evidence="14">
    <original>G</original>
    <variation>E</variation>
    <location>
        <position position="412"/>
    </location>
</feature>
<feature type="sequence variant" id="VAR_006605" description="In HEMB; moderate to severe; dbSNP:rs1306658513." evidence="65 74">
    <original>G</original>
    <variation>R</variation>
    <location>
        <position position="413"/>
    </location>
</feature>
<feature type="sequence variant" id="VAR_017321" description="In HEMB; Bergamo; increased protein abundance; loss of function in blood coagulation; dbSNP:rs137852265." evidence="15 32 39">
    <original>P</original>
    <variation>T</variation>
    <location>
        <position position="414"/>
    </location>
</feature>
<feature type="sequence variant" id="VAR_006606" description="In HEMB; moderately severe; dbSNP:rs137852280." evidence="66 68">
    <original>V</original>
    <variation>E</variation>
    <location>
        <position position="419"/>
    </location>
</feature>
<feature type="sequence variant" id="VAR_006607" description="In HEMB." evidence="74">
    <original>F</original>
    <variation>V</variation>
    <location>
        <position position="424"/>
    </location>
</feature>
<feature type="sequence variant" id="VAR_006608" description="In HEMB; severe; Barcelos; dbSNP:rs1928129466." evidence="69">
    <original>T</original>
    <variation>P</variation>
    <location>
        <position position="426"/>
    </location>
</feature>
<feature type="sequence variant" id="VAR_006609" description="In HEMB." evidence="6">
    <original>S</original>
    <variation>T</variation>
    <location>
        <position position="430"/>
    </location>
</feature>
<feature type="sequence variant" id="VAR_006610" description="In HEMB." evidence="6">
    <original>W</original>
    <variation>G</variation>
    <location>
        <position position="431"/>
    </location>
</feature>
<feature type="sequence variant" id="VAR_006611" description="In HEMB; moderate." evidence="64">
    <original>W</original>
    <variation>R</variation>
    <location>
        <position position="431"/>
    </location>
</feature>
<feature type="sequence variant" id="VAR_006612" description="In HEMB; severe; dbSNP:rs1170838100." evidence="64">
    <original>G</original>
    <variation>S</variation>
    <location>
        <position position="432"/>
    </location>
</feature>
<feature type="sequence variant" id="VAR_006613" description="In HEMB; severe." evidence="78">
    <original>G</original>
    <variation>V</variation>
    <location>
        <position position="432"/>
    </location>
</feature>
<feature type="sequence variant" id="VAR_006614" description="In HEMB." evidence="6">
    <original>E</original>
    <variation>A</variation>
    <location>
        <position position="433"/>
    </location>
</feature>
<feature type="sequence variant" id="VAR_006615" description="In HEMB; dbSNP:rs767828752." evidence="6">
    <original>E</original>
    <variation>K</variation>
    <location>
        <position position="433"/>
    </location>
</feature>
<feature type="sequence variant" id="VAR_017364" description="In HEMB; dbSNP:rs1385141619." evidence="15">
    <original>C</original>
    <variation>Y</variation>
    <location>
        <position position="435"/>
    </location>
</feature>
<feature type="sequence variant" id="VAR_006616" description="In HEMB; moderately severe; Niigata; dbSNP:rs137852266." evidence="53">
    <original>A</original>
    <variation>V</variation>
    <location>
        <position position="436"/>
    </location>
</feature>
<feature type="sequence variant" id="VAR_017365" description="In HEMB; dbSNP:rs1603267474." evidence="15">
    <original>G</original>
    <variation>E</variation>
    <location>
        <position position="442"/>
    </location>
</feature>
<feature type="sequence variant" id="VAR_017322" description="In HEMB; severe; Angers; dbSNP:rs137852267." evidence="44">
    <original>G</original>
    <variation>R</variation>
    <location>
        <position position="442"/>
    </location>
</feature>
<feature type="sequence variant" id="VAR_017323" description="In HEMB; moderately severe; Long Beach, Los Angeles and Vancouver; dbSNP:rs137852268." evidence="24 54">
    <original>I</original>
    <variation>T</variation>
    <location>
        <position position="443"/>
    </location>
</feature>
<feature type="sequence variant" id="VAR_006617" description="In HEMB; severe; Lousada.">
    <original>T</original>
    <variation>TIYT</variation>
    <location>
        <position position="445"/>
    </location>
</feature>
<feature type="sequence variant" id="VAR_073983" description="In HEMB; reduced protein abundance; loss of function in blood coagulation." evidence="39">
    <original>V</original>
    <variation>VYTKV</variation>
    <location>
        <position position="447"/>
    </location>
</feature>
<feature type="sequence variant" id="VAR_006618" description="In HEMB; mild; dbSNP:rs143018900." evidence="66">
    <original>R</original>
    <variation>Q</variation>
    <location>
        <position position="449"/>
    </location>
</feature>
<feature type="sequence variant" id="VAR_006619" description="In HEMB; mild; dbSNP:rs757996262." evidence="15">
    <original>R</original>
    <variation>W</variation>
    <location>
        <position position="449"/>
    </location>
</feature>
<feature type="sequence variant" id="VAR_006620" description="In HEMB; severe; dbSNP:rs1243180674." evidence="78">
    <original>Y</original>
    <variation>C</variation>
    <location>
        <position position="450"/>
    </location>
</feature>
<feature type="sequence variant" id="VAR_017324" description="In HEMB; dbSNP:rs137852269." evidence="48">
    <original>W</original>
    <variation>R</variation>
    <location>
        <position position="453"/>
    </location>
</feature>
<feature type="sequence variant" id="VAR_006621" description="In HEMB; Italy; dbSNP:rs1603267486." evidence="76">
    <original>I</original>
    <variation>T</variation>
    <location>
        <position position="454"/>
    </location>
</feature>
<feature type="sequence variant" id="VAR_014308" description="In dbSNP:rs4149751." evidence="80">
    <original>T</original>
    <variation>P</variation>
    <location>
        <position position="461"/>
    </location>
</feature>
<feature type="mutagenesis site" description="Strongly increases enzyme activity with a synthetic peptide substrate; when associated with T-311; A-365 and T-391." evidence="13">
    <original>Y</original>
    <variation>F</variation>
    <location>
        <position position="305"/>
    </location>
</feature>
<feature type="mutagenesis site" description="Strongly increases enzyme activity with a synthetic peptide substrate; when associated with F-305; A-365 and T-391." evidence="13">
    <original>K</original>
    <variation>T</variation>
    <location>
        <position position="311"/>
    </location>
</feature>
<feature type="mutagenesis site" description="Strongly decreases enzyme activity with a synthetic peptide substrate." evidence="13">
    <original>Y</original>
    <variation>A</variation>
    <location>
        <position position="312"/>
    </location>
</feature>
<feature type="mutagenesis site" description="Strongly increases enzyme activity with a synthetic peptide substrate; when associated with F-305; T-311 and A-365." evidence="13">
    <original>Y</original>
    <variation>T</variation>
    <location>
        <position position="391"/>
    </location>
</feature>
<feature type="strand" evidence="99">
    <location>
        <begin position="50"/>
        <end position="52"/>
    </location>
</feature>
<feature type="helix" evidence="99">
    <location>
        <begin position="60"/>
        <end position="64"/>
    </location>
</feature>
<feature type="strand" evidence="97">
    <location>
        <begin position="65"/>
        <end position="67"/>
    </location>
</feature>
<feature type="helix" evidence="99">
    <location>
        <begin position="71"/>
        <end position="75"/>
    </location>
</feature>
<feature type="strand" evidence="99">
    <location>
        <begin position="78"/>
        <end position="80"/>
    </location>
</feature>
<feature type="helix" evidence="99">
    <location>
        <begin position="81"/>
        <end position="90"/>
    </location>
</feature>
<feature type="turn" evidence="98">
    <location>
        <begin position="96"/>
        <end position="99"/>
    </location>
</feature>
<feature type="strand" evidence="102">
    <location>
        <begin position="102"/>
        <end position="105"/>
    </location>
</feature>
<feature type="strand" evidence="98">
    <location>
        <begin position="107"/>
        <end position="111"/>
    </location>
</feature>
<feature type="strand" evidence="98">
    <location>
        <begin position="114"/>
        <end position="118"/>
    </location>
</feature>
<feature type="turn" evidence="102">
    <location>
        <begin position="125"/>
        <end position="128"/>
    </location>
</feature>
<feature type="turn" evidence="105">
    <location>
        <begin position="134"/>
        <end position="136"/>
    </location>
</feature>
<feature type="helix" evidence="103">
    <location>
        <begin position="137"/>
        <end position="140"/>
    </location>
</feature>
<feature type="strand" evidence="103">
    <location>
        <begin position="142"/>
        <end position="148"/>
    </location>
</feature>
<feature type="turn" evidence="103">
    <location>
        <begin position="149"/>
        <end position="151"/>
    </location>
</feature>
<feature type="strand" evidence="103">
    <location>
        <begin position="152"/>
        <end position="156"/>
    </location>
</feature>
<feature type="strand" evidence="103">
    <location>
        <begin position="161"/>
        <end position="163"/>
    </location>
</feature>
<feature type="strand" evidence="100">
    <location>
        <begin position="165"/>
        <end position="168"/>
    </location>
</feature>
<feature type="strand" evidence="103">
    <location>
        <begin position="170"/>
        <end position="172"/>
    </location>
</feature>
<feature type="strand" evidence="103">
    <location>
        <begin position="174"/>
        <end position="176"/>
    </location>
</feature>
<feature type="strand" evidence="101">
    <location>
        <begin position="187"/>
        <end position="189"/>
    </location>
</feature>
<feature type="strand" evidence="103">
    <location>
        <begin position="241"/>
        <end position="248"/>
    </location>
</feature>
<feature type="strand" evidence="103">
    <location>
        <begin position="252"/>
        <end position="258"/>
    </location>
</feature>
<feature type="strand" evidence="103">
    <location>
        <begin position="261"/>
        <end position="264"/>
    </location>
</feature>
<feature type="helix" evidence="103">
    <location>
        <begin position="266"/>
        <end position="268"/>
    </location>
</feature>
<feature type="strand" evidence="103">
    <location>
        <begin position="269"/>
        <end position="271"/>
    </location>
</feature>
<feature type="strand" evidence="103">
    <location>
        <begin position="276"/>
        <end position="280"/>
    </location>
</feature>
<feature type="strand" evidence="105">
    <location>
        <begin position="282"/>
        <end position="286"/>
    </location>
</feature>
<feature type="strand" evidence="103">
    <location>
        <begin position="292"/>
        <end position="301"/>
    </location>
</feature>
<feature type="turn" evidence="103">
    <location>
        <begin position="303"/>
        <end position="306"/>
    </location>
</feature>
<feature type="strand" evidence="103">
    <location>
        <begin position="307"/>
        <end position="310"/>
    </location>
</feature>
<feature type="turn" evidence="104">
    <location>
        <begin position="311"/>
        <end position="314"/>
    </location>
</feature>
<feature type="strand" evidence="103">
    <location>
        <begin position="317"/>
        <end position="323"/>
    </location>
</feature>
<feature type="strand" evidence="106">
    <location>
        <begin position="328"/>
        <end position="331"/>
    </location>
</feature>
<feature type="helix" evidence="103">
    <location>
        <begin position="339"/>
        <end position="347"/>
    </location>
</feature>
<feature type="strand" evidence="103">
    <location>
        <begin position="350"/>
        <end position="360"/>
    </location>
</feature>
<feature type="strand" evidence="103">
    <location>
        <begin position="370"/>
        <end position="377"/>
    </location>
</feature>
<feature type="helix" evidence="103">
    <location>
        <begin position="379"/>
        <end position="384"/>
    </location>
</feature>
<feature type="strand" evidence="108">
    <location>
        <begin position="386"/>
        <end position="388"/>
    </location>
</feature>
<feature type="turn" evidence="107">
    <location>
        <begin position="391"/>
        <end position="393"/>
    </location>
</feature>
<feature type="strand" evidence="103">
    <location>
        <begin position="394"/>
        <end position="398"/>
    </location>
</feature>
<feature type="strand" evidence="105">
    <location>
        <begin position="400"/>
        <end position="403"/>
    </location>
</feature>
<feature type="turn" evidence="108">
    <location>
        <begin position="408"/>
        <end position="412"/>
    </location>
</feature>
<feature type="strand" evidence="103">
    <location>
        <begin position="414"/>
        <end position="419"/>
    </location>
</feature>
<feature type="strand" evidence="103">
    <location>
        <begin position="422"/>
        <end position="431"/>
    </location>
</feature>
<feature type="strand" evidence="103">
    <location>
        <begin position="433"/>
        <end position="436"/>
    </location>
</feature>
<feature type="strand" evidence="103">
    <location>
        <begin position="442"/>
        <end position="446"/>
    </location>
</feature>
<feature type="helix" evidence="103">
    <location>
        <begin position="447"/>
        <end position="450"/>
    </location>
</feature>
<feature type="helix" evidence="103">
    <location>
        <begin position="451"/>
        <end position="457"/>
    </location>
</feature>
<evidence type="ECO:0000250" key="1">
    <source>
        <dbReference type="UniProtKB" id="P00741"/>
    </source>
</evidence>
<evidence type="ECO:0000255" key="2"/>
<evidence type="ECO:0000255" key="3">
    <source>
        <dbReference type="PROSITE-ProRule" id="PRU00076"/>
    </source>
</evidence>
<evidence type="ECO:0000255" key="4">
    <source>
        <dbReference type="PROSITE-ProRule" id="PRU00274"/>
    </source>
</evidence>
<evidence type="ECO:0000255" key="5">
    <source>
        <dbReference type="PROSITE-ProRule" id="PRU00463"/>
    </source>
</evidence>
<evidence type="ECO:0000269" key="6">
    <source>
    </source>
</evidence>
<evidence type="ECO:0000269" key="7">
    <source>
    </source>
</evidence>
<evidence type="ECO:0000269" key="8">
    <source>
    </source>
</evidence>
<evidence type="ECO:0000269" key="9">
    <source>
    </source>
</evidence>
<evidence type="ECO:0000269" key="10">
    <source>
    </source>
</evidence>
<evidence type="ECO:0000269" key="11">
    <source>
    </source>
</evidence>
<evidence type="ECO:0000269" key="12">
    <source>
    </source>
</evidence>
<evidence type="ECO:0000269" key="13">
    <source>
    </source>
</evidence>
<evidence type="ECO:0000269" key="14">
    <source>
    </source>
</evidence>
<evidence type="ECO:0000269" key="15">
    <source>
    </source>
</evidence>
<evidence type="ECO:0000269" key="16">
    <source>
    </source>
</evidence>
<evidence type="ECO:0000269" key="17">
    <source>
    </source>
</evidence>
<evidence type="ECO:0000269" key="18">
    <source>
    </source>
</evidence>
<evidence type="ECO:0000269" key="19">
    <source>
    </source>
</evidence>
<evidence type="ECO:0000269" key="20">
    <source>
    </source>
</evidence>
<evidence type="ECO:0000269" key="21">
    <source>
    </source>
</evidence>
<evidence type="ECO:0000269" key="22">
    <source>
    </source>
</evidence>
<evidence type="ECO:0000269" key="23">
    <source>
    </source>
</evidence>
<evidence type="ECO:0000269" key="24">
    <source>
    </source>
</evidence>
<evidence type="ECO:0000269" key="25">
    <source>
    </source>
</evidence>
<evidence type="ECO:0000269" key="26">
    <source>
    </source>
</evidence>
<evidence type="ECO:0000269" key="27">
    <source>
    </source>
</evidence>
<evidence type="ECO:0000269" key="28">
    <source>
    </source>
</evidence>
<evidence type="ECO:0000269" key="29">
    <source>
    </source>
</evidence>
<evidence type="ECO:0000269" key="30">
    <source>
    </source>
</evidence>
<evidence type="ECO:0000269" key="31">
    <source>
    </source>
</evidence>
<evidence type="ECO:0000269" key="32">
    <source>
    </source>
</evidence>
<evidence type="ECO:0000269" key="33">
    <source>
    </source>
</evidence>
<evidence type="ECO:0000269" key="34">
    <source>
    </source>
</evidence>
<evidence type="ECO:0000269" key="35">
    <source>
    </source>
</evidence>
<evidence type="ECO:0000269" key="36">
    <source>
    </source>
</evidence>
<evidence type="ECO:0000269" key="37">
    <source>
    </source>
</evidence>
<evidence type="ECO:0000269" key="38">
    <source>
    </source>
</evidence>
<evidence type="ECO:0000269" key="39">
    <source>
    </source>
</evidence>
<evidence type="ECO:0000269" key="40">
    <source>
    </source>
</evidence>
<evidence type="ECO:0000269" key="41">
    <source>
    </source>
</evidence>
<evidence type="ECO:0000269" key="42">
    <source>
    </source>
</evidence>
<evidence type="ECO:0000269" key="43">
    <source>
    </source>
</evidence>
<evidence type="ECO:0000269" key="44">
    <source>
    </source>
</evidence>
<evidence type="ECO:0000269" key="45">
    <source>
    </source>
</evidence>
<evidence type="ECO:0000269" key="46">
    <source>
    </source>
</evidence>
<evidence type="ECO:0000269" key="47">
    <source>
    </source>
</evidence>
<evidence type="ECO:0000269" key="48">
    <source>
    </source>
</evidence>
<evidence type="ECO:0000269" key="49">
    <source>
    </source>
</evidence>
<evidence type="ECO:0000269" key="50">
    <source>
    </source>
</evidence>
<evidence type="ECO:0000269" key="51">
    <source>
    </source>
</evidence>
<evidence type="ECO:0000269" key="52">
    <source>
    </source>
</evidence>
<evidence type="ECO:0000269" key="53">
    <source>
    </source>
</evidence>
<evidence type="ECO:0000269" key="54">
    <source>
    </source>
</evidence>
<evidence type="ECO:0000269" key="55">
    <source>
    </source>
</evidence>
<evidence type="ECO:0000269" key="56">
    <source>
    </source>
</evidence>
<evidence type="ECO:0000269" key="57">
    <source>
    </source>
</evidence>
<evidence type="ECO:0000269" key="58">
    <source>
    </source>
</evidence>
<evidence type="ECO:0000269" key="59">
    <source>
    </source>
</evidence>
<evidence type="ECO:0000269" key="60">
    <source>
    </source>
</evidence>
<evidence type="ECO:0000269" key="61">
    <source>
    </source>
</evidence>
<evidence type="ECO:0000269" key="62">
    <source>
    </source>
</evidence>
<evidence type="ECO:0000269" key="63">
    <source>
    </source>
</evidence>
<evidence type="ECO:0000269" key="64">
    <source>
    </source>
</evidence>
<evidence type="ECO:0000269" key="65">
    <source>
    </source>
</evidence>
<evidence type="ECO:0000269" key="66">
    <source>
    </source>
</evidence>
<evidence type="ECO:0000269" key="67">
    <source>
    </source>
</evidence>
<evidence type="ECO:0000269" key="68">
    <source>
    </source>
</evidence>
<evidence type="ECO:0000269" key="69">
    <source>
    </source>
</evidence>
<evidence type="ECO:0000269" key="70">
    <source>
    </source>
</evidence>
<evidence type="ECO:0000269" key="71">
    <source>
    </source>
</evidence>
<evidence type="ECO:0000269" key="72">
    <source>
    </source>
</evidence>
<evidence type="ECO:0000269" key="73">
    <source>
    </source>
</evidence>
<evidence type="ECO:0000269" key="74">
    <source>
    </source>
</evidence>
<evidence type="ECO:0000269" key="75">
    <source>
    </source>
</evidence>
<evidence type="ECO:0000269" key="76">
    <source>
    </source>
</evidence>
<evidence type="ECO:0000269" key="77">
    <source>
    </source>
</evidence>
<evidence type="ECO:0000269" key="78">
    <source>
    </source>
</evidence>
<evidence type="ECO:0000269" key="79">
    <source ref="29"/>
</evidence>
<evidence type="ECO:0000269" key="80">
    <source ref="7"/>
</evidence>
<evidence type="ECO:0000303" key="81">
    <source>
    </source>
</evidence>
<evidence type="ECO:0000303" key="82">
    <source ref="6"/>
</evidence>
<evidence type="ECO:0000305" key="83">
    <source>
    </source>
</evidence>
<evidence type="ECO:0007744" key="84">
    <source>
        <dbReference type="PDB" id="1EDM"/>
    </source>
</evidence>
<evidence type="ECO:0007744" key="85">
    <source>
        <dbReference type="PDB" id="1IXA"/>
    </source>
</evidence>
<evidence type="ECO:0007744" key="86">
    <source>
        <dbReference type="PDB" id="1NL0"/>
    </source>
</evidence>
<evidence type="ECO:0007744" key="87">
    <source>
        <dbReference type="PDB" id="1RFN"/>
    </source>
</evidence>
<evidence type="ECO:0007744" key="88">
    <source>
        <dbReference type="PDB" id="2WPH"/>
    </source>
</evidence>
<evidence type="ECO:0007744" key="89">
    <source>
        <dbReference type="PDB" id="2WPI"/>
    </source>
</evidence>
<evidence type="ECO:0007744" key="90">
    <source>
        <dbReference type="PDB" id="2WPJ"/>
    </source>
</evidence>
<evidence type="ECO:0007744" key="91">
    <source>
        <dbReference type="PDB" id="2WPK"/>
    </source>
</evidence>
<evidence type="ECO:0007744" key="92">
    <source>
        <dbReference type="PDB" id="2WPL"/>
    </source>
</evidence>
<evidence type="ECO:0007744" key="93">
    <source>
        <dbReference type="PDB" id="2WPM"/>
    </source>
</evidence>
<evidence type="ECO:0007744" key="94">
    <source>
        <dbReference type="PDB" id="3KCG"/>
    </source>
</evidence>
<evidence type="ECO:0007744" key="95">
    <source>
        <dbReference type="PDB" id="3LC3"/>
    </source>
</evidence>
<evidence type="ECO:0007744" key="96">
    <source>
        <dbReference type="PDB" id="3LC5"/>
    </source>
</evidence>
<evidence type="ECO:0007829" key="97">
    <source>
        <dbReference type="PDB" id="1CFH"/>
    </source>
</evidence>
<evidence type="ECO:0007829" key="98">
    <source>
        <dbReference type="PDB" id="1EDM"/>
    </source>
</evidence>
<evidence type="ECO:0007829" key="99">
    <source>
        <dbReference type="PDB" id="1NL0"/>
    </source>
</evidence>
<evidence type="ECO:0007829" key="100">
    <source>
        <dbReference type="PDB" id="2WPI"/>
    </source>
</evidence>
<evidence type="ECO:0007829" key="101">
    <source>
        <dbReference type="PDB" id="2WPJ"/>
    </source>
</evidence>
<evidence type="ECO:0007829" key="102">
    <source>
        <dbReference type="PDB" id="4WMA"/>
    </source>
</evidence>
<evidence type="ECO:0007829" key="103">
    <source>
        <dbReference type="PDB" id="5JB9"/>
    </source>
</evidence>
<evidence type="ECO:0007829" key="104">
    <source>
        <dbReference type="PDB" id="5TNT"/>
    </source>
</evidence>
<evidence type="ECO:0007829" key="105">
    <source>
        <dbReference type="PDB" id="6MV4"/>
    </source>
</evidence>
<evidence type="ECO:0007829" key="106">
    <source>
        <dbReference type="PDB" id="6X5P"/>
    </source>
</evidence>
<evidence type="ECO:0007829" key="107">
    <source>
        <dbReference type="PDB" id="8EPH"/>
    </source>
</evidence>
<evidence type="ECO:0007829" key="108">
    <source>
        <dbReference type="PDB" id="8EPK"/>
    </source>
</evidence>
<name>FA9_HUMAN</name>
<reference key="1">
    <citation type="journal article" date="1982" name="Proc. Natl. Acad. Sci. U.S.A.">
        <title>Isolation and characterization of a cDNA coding for human factor IX.</title>
        <authorList>
            <person name="Kurachi K."/>
            <person name="Davie E.W."/>
        </authorList>
    </citation>
    <scope>NUCLEOTIDE SEQUENCE [MRNA] (ISOFORM 1)</scope>
    <source>
        <tissue>Liver</tissue>
    </source>
</reference>
<reference key="2">
    <citation type="journal article" date="1983" name="Nucleic Acids Res.">
        <title>Isolation of a human anti-haemophilic factor IX cDNA clone using a unique 52-base synthetic oligonucleotide probe deduced from the amino acid sequence of bovine factor IX.</title>
        <authorList>
            <person name="Jaye M."/>
            <person name="de la Salle H."/>
            <person name="Schamber F."/>
            <person name="Balland A."/>
            <person name="Kohli V."/>
            <person name="Findeli A."/>
            <person name="Tolstoshev P."/>
            <person name="Lecocq J.-P."/>
        </authorList>
    </citation>
    <scope>NUCLEOTIDE SEQUENCE [MRNA] (ISOFORM 1)</scope>
    <source>
        <tissue>Liver</tissue>
    </source>
</reference>
<reference key="3">
    <citation type="journal article" date="1984" name="EMBO J.">
        <title>The gene structure of human anti-haemophilic factor IX.</title>
        <authorList>
            <person name="Anson D.S."/>
            <person name="Choo K.H."/>
            <person name="Rees D.J.G."/>
            <person name="Giannelli F."/>
            <person name="Gould K.G."/>
            <person name="Huddleston J.A."/>
            <person name="Brownlee G.G."/>
        </authorList>
    </citation>
    <scope>NUCLEOTIDE SEQUENCE [GENOMIC DNA]</scope>
    <scope>VARIANT ALA-194</scope>
</reference>
<reference key="4">
    <citation type="journal article" date="1985" name="Biochemistry">
        <title>Nucleotide sequence of the gene for human factor IX (antihemophilic factor B).</title>
        <authorList>
            <person name="Yoshitake S."/>
            <person name="Schach B.G."/>
            <person name="Foster D.C."/>
            <person name="Davie E.W."/>
            <person name="Kurachi K."/>
        </authorList>
    </citation>
    <scope>NUCLEOTIDE SEQUENCE [GENOMIC DNA]</scope>
    <scope>VARIANT ALA-194</scope>
</reference>
<reference key="5">
    <citation type="journal article" date="1985" name="Proc. Natl. Acad. Sci. U.S.A.">
        <title>Evidence for a prevalent dimorphism in the activation peptide of human coagulation factor IX.</title>
        <authorList>
            <person name="McGraw R.A."/>
            <person name="Davis L.M."/>
            <person name="Noyes C.M."/>
            <person name="Lundblad R.L."/>
            <person name="Roberts H.R."/>
            <person name="Graham J.B."/>
            <person name="Stafford D.W."/>
        </authorList>
    </citation>
    <scope>NUCLEOTIDE SEQUENCE [MRNA] (ISOFORM 1)</scope>
    <scope>VARIANT ALA-194</scope>
    <scope>SUBCELLULAR LOCATION</scope>
    <scope>TISSUE SPECIFICITY</scope>
    <scope>PARTIAL PROTEIN SEQUENCE</scope>
</reference>
<reference key="6">
    <citation type="submission" date="2004-08" db="EMBL/GenBank/DDBJ databases">
        <title>Alternative splicing variant of Homo sapiens coagulation factor IX lacking EGF like domain.</title>
        <authorList>
            <person name="Sata S."/>
            <person name="Yonemitsu Y."/>
            <person name="Nakagawa K."/>
            <person name="Sueishi K."/>
        </authorList>
    </citation>
    <scope>NUCLEOTIDE SEQUENCE [MRNA] (ISOFORM 2)</scope>
    <scope>ALTERNATIVE SPLICING</scope>
    <source>
        <tissue>Liver</tissue>
    </source>
</reference>
<reference key="7">
    <citation type="submission" date="2002-08" db="EMBL/GenBank/DDBJ databases">
        <authorList>
            <consortium name="SeattleSNPs variation discovery resource"/>
        </authorList>
    </citation>
    <scope>NUCLEOTIDE SEQUENCE [GENOMIC DNA]</scope>
    <scope>VARIANT PRO-461</scope>
</reference>
<reference key="8">
    <citation type="submission" date="2011-03" db="EMBL/GenBank/DDBJ databases">
        <title>Homo sapiens coagulation factor IX (F9), mRNA.</title>
        <authorList>
            <person name="Nguyen D.T."/>
            <person name="Nguyen P.V."/>
            <person name="Nong H.V."/>
        </authorList>
    </citation>
    <scope>NUCLEOTIDE SEQUENCE [MRNA] (ISOFORM 1)</scope>
    <source>
        <tissue>Liver</tissue>
    </source>
</reference>
<reference key="9">
    <citation type="journal article" date="2004" name="Nat. Genet.">
        <title>Complete sequencing and characterization of 21,243 full-length human cDNAs.</title>
        <authorList>
            <person name="Ota T."/>
            <person name="Suzuki Y."/>
            <person name="Nishikawa T."/>
            <person name="Otsuki T."/>
            <person name="Sugiyama T."/>
            <person name="Irie R."/>
            <person name="Wakamatsu A."/>
            <person name="Hayashi K."/>
            <person name="Sato H."/>
            <person name="Nagai K."/>
            <person name="Kimura K."/>
            <person name="Makita H."/>
            <person name="Sekine M."/>
            <person name="Obayashi M."/>
            <person name="Nishi T."/>
            <person name="Shibahara T."/>
            <person name="Tanaka T."/>
            <person name="Ishii S."/>
            <person name="Yamamoto J."/>
            <person name="Saito K."/>
            <person name="Kawai Y."/>
            <person name="Isono Y."/>
            <person name="Nakamura Y."/>
            <person name="Nagahari K."/>
            <person name="Murakami K."/>
            <person name="Yasuda T."/>
            <person name="Iwayanagi T."/>
            <person name="Wagatsuma M."/>
            <person name="Shiratori A."/>
            <person name="Sudo H."/>
            <person name="Hosoiri T."/>
            <person name="Kaku Y."/>
            <person name="Kodaira H."/>
            <person name="Kondo H."/>
            <person name="Sugawara M."/>
            <person name="Takahashi M."/>
            <person name="Kanda K."/>
            <person name="Yokoi T."/>
            <person name="Furuya T."/>
            <person name="Kikkawa E."/>
            <person name="Omura Y."/>
            <person name="Abe K."/>
            <person name="Kamihara K."/>
            <person name="Katsuta N."/>
            <person name="Sato K."/>
            <person name="Tanikawa M."/>
            <person name="Yamazaki M."/>
            <person name="Ninomiya K."/>
            <person name="Ishibashi T."/>
            <person name="Yamashita H."/>
            <person name="Murakawa K."/>
            <person name="Fujimori K."/>
            <person name="Tanai H."/>
            <person name="Kimata M."/>
            <person name="Watanabe M."/>
            <person name="Hiraoka S."/>
            <person name="Chiba Y."/>
            <person name="Ishida S."/>
            <person name="Ono Y."/>
            <person name="Takiguchi S."/>
            <person name="Watanabe S."/>
            <person name="Yosida M."/>
            <person name="Hotuta T."/>
            <person name="Kusano J."/>
            <person name="Kanehori K."/>
            <person name="Takahashi-Fujii A."/>
            <person name="Hara H."/>
            <person name="Tanase T.-O."/>
            <person name="Nomura Y."/>
            <person name="Togiya S."/>
            <person name="Komai F."/>
            <person name="Hara R."/>
            <person name="Takeuchi K."/>
            <person name="Arita M."/>
            <person name="Imose N."/>
            <person name="Musashino K."/>
            <person name="Yuuki H."/>
            <person name="Oshima A."/>
            <person name="Sasaki N."/>
            <person name="Aotsuka S."/>
            <person name="Yoshikawa Y."/>
            <person name="Matsunawa H."/>
            <person name="Ichihara T."/>
            <person name="Shiohata N."/>
            <person name="Sano S."/>
            <person name="Moriya S."/>
            <person name="Momiyama H."/>
            <person name="Satoh N."/>
            <person name="Takami S."/>
            <person name="Terashima Y."/>
            <person name="Suzuki O."/>
            <person name="Nakagawa S."/>
            <person name="Senoh A."/>
            <person name="Mizoguchi H."/>
            <person name="Goto Y."/>
            <person name="Shimizu F."/>
            <person name="Wakebe H."/>
            <person name="Hishigaki H."/>
            <person name="Watanabe T."/>
            <person name="Sugiyama A."/>
            <person name="Takemoto M."/>
            <person name="Kawakami B."/>
            <person name="Yamazaki M."/>
            <person name="Watanabe K."/>
            <person name="Kumagai A."/>
            <person name="Itakura S."/>
            <person name="Fukuzumi Y."/>
            <person name="Fujimori Y."/>
            <person name="Komiyama M."/>
            <person name="Tashiro H."/>
            <person name="Tanigami A."/>
            <person name="Fujiwara T."/>
            <person name="Ono T."/>
            <person name="Yamada K."/>
            <person name="Fujii Y."/>
            <person name="Ozaki K."/>
            <person name="Hirao M."/>
            <person name="Ohmori Y."/>
            <person name="Kawabata A."/>
            <person name="Hikiji T."/>
            <person name="Kobatake N."/>
            <person name="Inagaki H."/>
            <person name="Ikema Y."/>
            <person name="Okamoto S."/>
            <person name="Okitani R."/>
            <person name="Kawakami T."/>
            <person name="Noguchi S."/>
            <person name="Itoh T."/>
            <person name="Shigeta K."/>
            <person name="Senba T."/>
            <person name="Matsumura K."/>
            <person name="Nakajima Y."/>
            <person name="Mizuno T."/>
            <person name="Morinaga M."/>
            <person name="Sasaki M."/>
            <person name="Togashi T."/>
            <person name="Oyama M."/>
            <person name="Hata H."/>
            <person name="Watanabe M."/>
            <person name="Komatsu T."/>
            <person name="Mizushima-Sugano J."/>
            <person name="Satoh T."/>
            <person name="Shirai Y."/>
            <person name="Takahashi Y."/>
            <person name="Nakagawa K."/>
            <person name="Okumura K."/>
            <person name="Nagase T."/>
            <person name="Nomura N."/>
            <person name="Kikuchi H."/>
            <person name="Masuho Y."/>
            <person name="Yamashita R."/>
            <person name="Nakai K."/>
            <person name="Yada T."/>
            <person name="Nakamura Y."/>
            <person name="Ohara O."/>
            <person name="Isogai T."/>
            <person name="Sugano S."/>
        </authorList>
    </citation>
    <scope>NUCLEOTIDE SEQUENCE [LARGE SCALE MRNA] (ISOFORM 1)</scope>
    <source>
        <tissue>Liver</tissue>
    </source>
</reference>
<reference key="10">
    <citation type="journal article" date="2005" name="Nature">
        <title>The DNA sequence of the human X chromosome.</title>
        <authorList>
            <person name="Ross M.T."/>
            <person name="Grafham D.V."/>
            <person name="Coffey A.J."/>
            <person name="Scherer S."/>
            <person name="McLay K."/>
            <person name="Muzny D."/>
            <person name="Platzer M."/>
            <person name="Howell G.R."/>
            <person name="Burrows C."/>
            <person name="Bird C.P."/>
            <person name="Frankish A."/>
            <person name="Lovell F.L."/>
            <person name="Howe K.L."/>
            <person name="Ashurst J.L."/>
            <person name="Fulton R.S."/>
            <person name="Sudbrak R."/>
            <person name="Wen G."/>
            <person name="Jones M.C."/>
            <person name="Hurles M.E."/>
            <person name="Andrews T.D."/>
            <person name="Scott C.E."/>
            <person name="Searle S."/>
            <person name="Ramser J."/>
            <person name="Whittaker A."/>
            <person name="Deadman R."/>
            <person name="Carter N.P."/>
            <person name="Hunt S.E."/>
            <person name="Chen R."/>
            <person name="Cree A."/>
            <person name="Gunaratne P."/>
            <person name="Havlak P."/>
            <person name="Hodgson A."/>
            <person name="Metzker M.L."/>
            <person name="Richards S."/>
            <person name="Scott G."/>
            <person name="Steffen D."/>
            <person name="Sodergren E."/>
            <person name="Wheeler D.A."/>
            <person name="Worley K.C."/>
            <person name="Ainscough R."/>
            <person name="Ambrose K.D."/>
            <person name="Ansari-Lari M.A."/>
            <person name="Aradhya S."/>
            <person name="Ashwell R.I."/>
            <person name="Babbage A.K."/>
            <person name="Bagguley C.L."/>
            <person name="Ballabio A."/>
            <person name="Banerjee R."/>
            <person name="Barker G.E."/>
            <person name="Barlow K.F."/>
            <person name="Barrett I.P."/>
            <person name="Bates K.N."/>
            <person name="Beare D.M."/>
            <person name="Beasley H."/>
            <person name="Beasley O."/>
            <person name="Beck A."/>
            <person name="Bethel G."/>
            <person name="Blechschmidt K."/>
            <person name="Brady N."/>
            <person name="Bray-Allen S."/>
            <person name="Bridgeman A.M."/>
            <person name="Brown A.J."/>
            <person name="Brown M.J."/>
            <person name="Bonnin D."/>
            <person name="Bruford E.A."/>
            <person name="Buhay C."/>
            <person name="Burch P."/>
            <person name="Burford D."/>
            <person name="Burgess J."/>
            <person name="Burrill W."/>
            <person name="Burton J."/>
            <person name="Bye J.M."/>
            <person name="Carder C."/>
            <person name="Carrel L."/>
            <person name="Chako J."/>
            <person name="Chapman J.C."/>
            <person name="Chavez D."/>
            <person name="Chen E."/>
            <person name="Chen G."/>
            <person name="Chen Y."/>
            <person name="Chen Z."/>
            <person name="Chinault C."/>
            <person name="Ciccodicola A."/>
            <person name="Clark S.Y."/>
            <person name="Clarke G."/>
            <person name="Clee C.M."/>
            <person name="Clegg S."/>
            <person name="Clerc-Blankenburg K."/>
            <person name="Clifford K."/>
            <person name="Cobley V."/>
            <person name="Cole C.G."/>
            <person name="Conquer J.S."/>
            <person name="Corby N."/>
            <person name="Connor R.E."/>
            <person name="David R."/>
            <person name="Davies J."/>
            <person name="Davis C."/>
            <person name="Davis J."/>
            <person name="Delgado O."/>
            <person name="Deshazo D."/>
            <person name="Dhami P."/>
            <person name="Ding Y."/>
            <person name="Dinh H."/>
            <person name="Dodsworth S."/>
            <person name="Draper H."/>
            <person name="Dugan-Rocha S."/>
            <person name="Dunham A."/>
            <person name="Dunn M."/>
            <person name="Durbin K.J."/>
            <person name="Dutta I."/>
            <person name="Eades T."/>
            <person name="Ellwood M."/>
            <person name="Emery-Cohen A."/>
            <person name="Errington H."/>
            <person name="Evans K.L."/>
            <person name="Faulkner L."/>
            <person name="Francis F."/>
            <person name="Frankland J."/>
            <person name="Fraser A.E."/>
            <person name="Galgoczy P."/>
            <person name="Gilbert J."/>
            <person name="Gill R."/>
            <person name="Gloeckner G."/>
            <person name="Gregory S.G."/>
            <person name="Gribble S."/>
            <person name="Griffiths C."/>
            <person name="Grocock R."/>
            <person name="Gu Y."/>
            <person name="Gwilliam R."/>
            <person name="Hamilton C."/>
            <person name="Hart E.A."/>
            <person name="Hawes A."/>
            <person name="Heath P.D."/>
            <person name="Heitmann K."/>
            <person name="Hennig S."/>
            <person name="Hernandez J."/>
            <person name="Hinzmann B."/>
            <person name="Ho S."/>
            <person name="Hoffs M."/>
            <person name="Howden P.J."/>
            <person name="Huckle E.J."/>
            <person name="Hume J."/>
            <person name="Hunt P.J."/>
            <person name="Hunt A.R."/>
            <person name="Isherwood J."/>
            <person name="Jacob L."/>
            <person name="Johnson D."/>
            <person name="Jones S."/>
            <person name="de Jong P.J."/>
            <person name="Joseph S.S."/>
            <person name="Keenan S."/>
            <person name="Kelly S."/>
            <person name="Kershaw J.K."/>
            <person name="Khan Z."/>
            <person name="Kioschis P."/>
            <person name="Klages S."/>
            <person name="Knights A.J."/>
            <person name="Kosiura A."/>
            <person name="Kovar-Smith C."/>
            <person name="Laird G.K."/>
            <person name="Langford C."/>
            <person name="Lawlor S."/>
            <person name="Leversha M."/>
            <person name="Lewis L."/>
            <person name="Liu W."/>
            <person name="Lloyd C."/>
            <person name="Lloyd D.M."/>
            <person name="Loulseged H."/>
            <person name="Loveland J.E."/>
            <person name="Lovell J.D."/>
            <person name="Lozado R."/>
            <person name="Lu J."/>
            <person name="Lyne R."/>
            <person name="Ma J."/>
            <person name="Maheshwari M."/>
            <person name="Matthews L.H."/>
            <person name="McDowall J."/>
            <person name="McLaren S."/>
            <person name="McMurray A."/>
            <person name="Meidl P."/>
            <person name="Meitinger T."/>
            <person name="Milne S."/>
            <person name="Miner G."/>
            <person name="Mistry S.L."/>
            <person name="Morgan M."/>
            <person name="Morris S."/>
            <person name="Mueller I."/>
            <person name="Mullikin J.C."/>
            <person name="Nguyen N."/>
            <person name="Nordsiek G."/>
            <person name="Nyakatura G."/>
            <person name="O'dell C.N."/>
            <person name="Okwuonu G."/>
            <person name="Palmer S."/>
            <person name="Pandian R."/>
            <person name="Parker D."/>
            <person name="Parrish J."/>
            <person name="Pasternak S."/>
            <person name="Patel D."/>
            <person name="Pearce A.V."/>
            <person name="Pearson D.M."/>
            <person name="Pelan S.E."/>
            <person name="Perez L."/>
            <person name="Porter K.M."/>
            <person name="Ramsey Y."/>
            <person name="Reichwald K."/>
            <person name="Rhodes S."/>
            <person name="Ridler K.A."/>
            <person name="Schlessinger D."/>
            <person name="Schueler M.G."/>
            <person name="Sehra H.K."/>
            <person name="Shaw-Smith C."/>
            <person name="Shen H."/>
            <person name="Sheridan E.M."/>
            <person name="Shownkeen R."/>
            <person name="Skuce C.D."/>
            <person name="Smith M.L."/>
            <person name="Sotheran E.C."/>
            <person name="Steingruber H.E."/>
            <person name="Steward C.A."/>
            <person name="Storey R."/>
            <person name="Swann R.M."/>
            <person name="Swarbreck D."/>
            <person name="Tabor P.E."/>
            <person name="Taudien S."/>
            <person name="Taylor T."/>
            <person name="Teague B."/>
            <person name="Thomas K."/>
            <person name="Thorpe A."/>
            <person name="Timms K."/>
            <person name="Tracey A."/>
            <person name="Trevanion S."/>
            <person name="Tromans A.C."/>
            <person name="d'Urso M."/>
            <person name="Verduzco D."/>
            <person name="Villasana D."/>
            <person name="Waldron L."/>
            <person name="Wall M."/>
            <person name="Wang Q."/>
            <person name="Warren J."/>
            <person name="Warry G.L."/>
            <person name="Wei X."/>
            <person name="West A."/>
            <person name="Whitehead S.L."/>
            <person name="Whiteley M.N."/>
            <person name="Wilkinson J.E."/>
            <person name="Willey D.L."/>
            <person name="Williams G."/>
            <person name="Williams L."/>
            <person name="Williamson A."/>
            <person name="Williamson H."/>
            <person name="Wilming L."/>
            <person name="Woodmansey R.L."/>
            <person name="Wray P.W."/>
            <person name="Yen J."/>
            <person name="Zhang J."/>
            <person name="Zhou J."/>
            <person name="Zoghbi H."/>
            <person name="Zorilla S."/>
            <person name="Buck D."/>
            <person name="Reinhardt R."/>
            <person name="Poustka A."/>
            <person name="Rosenthal A."/>
            <person name="Lehrach H."/>
            <person name="Meindl A."/>
            <person name="Minx P.J."/>
            <person name="Hillier L.W."/>
            <person name="Willard H.F."/>
            <person name="Wilson R.K."/>
            <person name="Waterston R.H."/>
            <person name="Rice C.M."/>
            <person name="Vaudin M."/>
            <person name="Coulson A."/>
            <person name="Nelson D.L."/>
            <person name="Weinstock G."/>
            <person name="Sulston J.E."/>
            <person name="Durbin R.M."/>
            <person name="Hubbard T."/>
            <person name="Gibbs R.A."/>
            <person name="Beck S."/>
            <person name="Rogers J."/>
            <person name="Bentley D.R."/>
        </authorList>
    </citation>
    <scope>NUCLEOTIDE SEQUENCE [LARGE SCALE GENOMIC DNA]</scope>
</reference>
<reference key="11">
    <citation type="submission" date="2005-09" db="EMBL/GenBank/DDBJ databases">
        <authorList>
            <person name="Mural R.J."/>
            <person name="Istrail S."/>
            <person name="Sutton G.G."/>
            <person name="Florea L."/>
            <person name="Halpern A.L."/>
            <person name="Mobarry C.M."/>
            <person name="Lippert R."/>
            <person name="Walenz B."/>
            <person name="Shatkay H."/>
            <person name="Dew I."/>
            <person name="Miller J.R."/>
            <person name="Flanigan M.J."/>
            <person name="Edwards N.J."/>
            <person name="Bolanos R."/>
            <person name="Fasulo D."/>
            <person name="Halldorsson B.V."/>
            <person name="Hannenhalli S."/>
            <person name="Turner R."/>
            <person name="Yooseph S."/>
            <person name="Lu F."/>
            <person name="Nusskern D.R."/>
            <person name="Shue B.C."/>
            <person name="Zheng X.H."/>
            <person name="Zhong F."/>
            <person name="Delcher A.L."/>
            <person name="Huson D.H."/>
            <person name="Kravitz S.A."/>
            <person name="Mouchard L."/>
            <person name="Reinert K."/>
            <person name="Remington K.A."/>
            <person name="Clark A.G."/>
            <person name="Waterman M.S."/>
            <person name="Eichler E.E."/>
            <person name="Adams M.D."/>
            <person name="Hunkapiller M.W."/>
            <person name="Myers E.W."/>
            <person name="Venter J.C."/>
        </authorList>
    </citation>
    <scope>NUCLEOTIDE SEQUENCE [LARGE SCALE GENOMIC DNA]</scope>
</reference>
<reference key="12">
    <citation type="journal article" date="2004" name="Genome Res.">
        <title>The status, quality, and expansion of the NIH full-length cDNA project: the Mammalian Gene Collection (MGC).</title>
        <authorList>
            <consortium name="The MGC Project Team"/>
        </authorList>
    </citation>
    <scope>NUCLEOTIDE SEQUENCE [LARGE SCALE MRNA] (ISOFORM 1)</scope>
</reference>
<reference key="13">
    <citation type="journal article" date="1993" name="Nouv. Rev. Fr. Hematol.">
        <title>The Arg-4 mutant factor IX Strasbourg 2 shows a delayed activation by factor XIa.</title>
        <authorList>
            <person name="de la Salle C."/>
            <person name="Charmantier J.L."/>
            <person name="Ravanat C."/>
            <person name="Ohlmann P."/>
            <person name="Hartmann M.L."/>
            <person name="Schuhler S."/>
            <person name="Bischoff R."/>
            <person name="Ebel C."/>
            <person name="Roecklin D."/>
            <person name="Balland A."/>
        </authorList>
    </citation>
    <scope>NUCLEOTIDE SEQUENCE [GENOMIC DNA] OF 30-84</scope>
    <scope>VARIANT HEMB GLN-43</scope>
    <scope>FUNCTION</scope>
    <scope>SUBCELLULAR LOCATION</scope>
    <scope>TISSUE SPECIFICITY</scope>
    <scope>PROTEOLYTIC CLEAVAGE</scope>
</reference>
<reference key="14">
    <citation type="journal article" date="1984" name="Somat. Cell Mol. Genet.">
        <title>Isolation and characterization of human factor IX cDNA: identification of Taq I polymorphism and regional assignment.</title>
        <authorList>
            <person name="Jagadeeswaran P."/>
            <person name="Lavelle D.E."/>
            <person name="Kaul R."/>
            <person name="Mohandas T."/>
            <person name="Warren S.T."/>
        </authorList>
    </citation>
    <scope>NUCLEOTIDE SEQUENCE [MRNA] OF 36-326 (ISOFORM 1)</scope>
    <source>
        <tissue>Liver</tissue>
    </source>
</reference>
<reference key="15">
    <citation type="journal article" date="1989" name="J. Biol. Chem.">
        <title>Blood clotting factor IX BM Nagoya. Substitution of arginine 180 by tryptophan and its activation by alpha-chymotrypsin and rat mast cell chymase.</title>
        <authorList>
            <person name="Suehiro K."/>
            <person name="Kawabata S."/>
            <person name="Miyata T."/>
            <person name="Takeya H."/>
            <person name="Takamatsu J."/>
            <person name="Ogata K."/>
            <person name="Kamiya T."/>
            <person name="Saito H."/>
            <person name="Niho Y."/>
            <person name="Iwanaga S."/>
        </authorList>
    </citation>
    <scope>PROTEIN SEQUENCE OF 47-461</scope>
    <scope>VARIANT HEMB TRP-226</scope>
    <scope>FUNCTION</scope>
    <scope>CATALYTIC ACTIVITY</scope>
    <scope>PROTEOLYTIC CLEAVAGE</scope>
    <scope>SUBCELLULAR LOCATION</scope>
    <scope>SUBUNIT</scope>
    <scope>TISSUE SPECIFICITY</scope>
</reference>
<reference key="16">
    <citation type="journal article" date="1997" name="Biochem. J.">
        <title>Modification of the N-terminus of human factor IX by defective propeptide cleavage or acetylation results in a destabilized calcium-induced conformation: effects on phospholipid binding and activation by factor XIa.</title>
        <authorList>
            <person name="Wojcik E.G."/>
            <person name="Van Den Berg M."/>
            <person name="Poort S.R."/>
            <person name="Bertina R.M."/>
        </authorList>
    </citation>
    <scope>PROTEIN SEQUENCE OF 47-52</scope>
    <scope>TISSUE SPECIFICITY</scope>
    <scope>SUBCELLULAR LOCATION</scope>
    <scope>CHARACTERIZATION OF VARIANTS HEMB GLN-43; LEU-43 AND TRP-43</scope>
    <scope>CALCIUM-BINDING</scope>
    <scope>PROTEOLYTIC CLEAVAGE</scope>
</reference>
<reference key="17">
    <citation type="journal article" date="1988" name="Science">
        <title>Genomic amplification with transcript sequencing.</title>
        <authorList>
            <person name="Stoflet E.S."/>
            <person name="Koeberl D.D."/>
            <person name="Sarkar G."/>
            <person name="Sommer S.S."/>
        </authorList>
    </citation>
    <scope>NUCLEOTIDE SEQUENCE [GENOMIC DNA] OF 290-359</scope>
</reference>
<reference key="18">
    <citation type="journal article" date="1993" name="Thromb. Haemost.">
        <title>A deletion located in the 3' non translated part of the factor IX gene responsible for mild haemophilia B.</title>
        <authorList>
            <person name="de la Salle C."/>
            <person name="Charmantier J.L."/>
            <person name="Baas M.-J."/>
            <person name="Schwartz A."/>
            <person name="Wiesel M.L."/>
            <person name="Grunebaum L."/>
            <person name="Cazenave J.-P."/>
        </authorList>
    </citation>
    <scope>NUCLEOTIDE SEQUENCE [GENOMIC DNA] OF 444-461</scope>
</reference>
<reference key="19">
    <citation type="journal article" date="1977" name="Proc. Natl. Acad. Sci. U.S.A.">
        <title>Activation of factor IX by the reaction product of tissue factor and factor VII: additional pathway for initiating blood coagulation.</title>
        <authorList>
            <person name="Osterud B."/>
            <person name="Rapaport S.I."/>
        </authorList>
    </citation>
    <scope>ACTIVATION</scope>
</reference>
<reference key="20">
    <citation type="journal article" date="1983" name="Biochem. Biophys. Res. Commun.">
        <title>The occurrence of beta-hydroxyaspartic acid in the vitamin K-dependent blood coagulation zymogens.</title>
        <authorList>
            <person name="McMullen B.A."/>
            <person name="Fujikawa K."/>
            <person name="Kisiel W."/>
        </authorList>
    </citation>
    <scope>HYDROXYLATION AT ASP-110</scope>
</reference>
<reference key="21">
    <citation type="journal article" date="1978" name="J. Clin. Invest.">
        <title>Activation of human factor IX (Christmas factor).</title>
        <authorList>
            <person name="di Scipio R.G."/>
            <person name="Kurachi K."/>
            <person name="Davie E.W."/>
        </authorList>
    </citation>
    <scope>PROTEOLYTIC PROCESSING</scope>
    <scope>ACTIVE SITE</scope>
</reference>
<reference key="22">
    <citation type="journal article" date="1984" name="J. Biol. Chem.">
        <title>Derivatives of blood coagulation factor IX contain a high affinity Ca2+-binding site that lacks gamma-carboxyglutamic acid.</title>
        <authorList>
            <person name="Morita T."/>
            <person name="Isaacs B.S."/>
            <person name="Esmon C.T."/>
            <person name="Johnson A.E."/>
        </authorList>
    </citation>
    <scope>CALCIUM-BINDING</scope>
    <scope>DOMAIN</scope>
</reference>
<reference key="23">
    <citation type="journal article" date="1985" name="J. Biol. Chem.">
        <authorList>
            <person name="Morita T."/>
            <person name="Isaacs B.S."/>
            <person name="Esmon C.T."/>
            <person name="Johnson A.E."/>
        </authorList>
    </citation>
    <scope>ERRATUM OF PUBMED:6425296</scope>
</reference>
<reference key="24">
    <citation type="journal article" date="1989" name="J. Biol. Chem.">
        <title>Identification of a disaccharide (Xyl-Glc) and a trisaccharide (Xyl2-Glc) O-glycosidically linked to a serine residue in the first epidermal growth factor-like domain of human factors VII and IX and protein Z and bovine protein Z.</title>
        <authorList>
            <person name="Nishimura H."/>
            <person name="Kawabata S."/>
            <person name="Kisiel W."/>
            <person name="Hase S."/>
            <person name="Ikenaka T."/>
            <person name="Takao T."/>
            <person name="Shimonishi Y."/>
            <person name="Iwanaga S."/>
        </authorList>
    </citation>
    <scope>GLYCOSYLATION AT SER-99</scope>
    <scope>STRUCTURE OF CARBOHYDRATE ON SER-99</scope>
</reference>
<reference key="25">
    <citation type="journal article" date="1990" name="Adv. Exp. Med. Biol.">
        <title>A new trisaccharide sugar chain linked to a serine residue in the first EGF-like domain of clotting factors VII and IX and protein Z.</title>
        <authorList>
            <person name="Iwanaga S."/>
            <person name="Nishimura H."/>
            <person name="Kawabata S."/>
            <person name="Kisiel W."/>
            <person name="Hase S."/>
            <person name="Ikenaka T."/>
        </authorList>
    </citation>
    <scope>GLYCOSYLATION AT SER-99</scope>
    <scope>STRUCTURE OF CARBOHYDRATE ON SER-99</scope>
</reference>
<reference key="26">
    <citation type="journal article" date="1992" name="Blood">
        <title>Role of gamma-carboxyglutamic acid residues in the binding of factor IXa to platelets and in factor-X activation.</title>
        <authorList>
            <person name="Rawala-Sheikh R."/>
            <person name="Ahmad S.S."/>
            <person name="Monroe D.M."/>
            <person name="Roberts H.R."/>
            <person name="Walsh P.N."/>
        </authorList>
    </citation>
    <scope>FUNCTION</scope>
    <scope>PROTEOLYTIC CLEAVAGE</scope>
</reference>
<reference key="27">
    <citation type="journal article" date="1992" name="J. Biol. Chem.">
        <title>Human factor IX has a tetrasaccharide O-glycosidically linked to serine 61 through the fucose residue.</title>
        <authorList>
            <person name="Nishimura H."/>
            <person name="Takao T."/>
            <person name="Hase S."/>
            <person name="Shimonishi Y."/>
            <person name="Iwanaga S."/>
        </authorList>
    </citation>
    <scope>GLYCOSYLATION AT SER-107</scope>
    <scope>STRUCTURE OF CARBOHYDRATE ON SER-107</scope>
</reference>
<reference key="28">
    <citation type="journal article" date="1994" name="Biochemistry">
        <title>Activation peptide of human factor IX has oligosaccharides O-glycosidically linked to threonine residues at 159 and 169.</title>
        <authorList>
            <person name="Agarwala K.L."/>
            <person name="Kawabata S."/>
            <person name="Takao T."/>
            <person name="Murata H."/>
            <person name="Shimonishi Y."/>
            <person name="Nishimura H."/>
            <person name="Iwanaga S."/>
        </authorList>
    </citation>
    <scope>GLYCOSYLATION AT THR-205 AND THR-215</scope>
</reference>
<reference key="29">
    <citation type="book" date="1996" name="Proceedings of XIth international conference on methods in protein structure analysis">
        <title>Partial phosphorylation of serine-68 in EGF-1 of human factor IX.</title>
        <authorList>
            <person name="Harris R.J."/>
            <person name="Papac D.I."/>
            <person name="Truong L."/>
            <person name="Smith K.J."/>
        </authorList>
    </citation>
    <scope>PHOSPHORYLATION AT SER-114</scope>
</reference>
<reference key="30">
    <citation type="journal article" date="2000" name="J. Biol. Chem.">
        <title>The insect salivary protein, prolixin-S, inhibits factor IXa generation and Xase complex formation in the blood coagulation pathway.</title>
        <authorList>
            <person name="Isawa H."/>
            <person name="Yuda M."/>
            <person name="Yoneda K."/>
            <person name="Chinzei Y."/>
        </authorList>
    </citation>
    <scope>INTERACTION WITH TRIATOMID BUG NITROPHORIN-2</scope>
</reference>
<reference key="31">
    <citation type="journal article" date="2001" name="Blood">
        <title>Posttranslational modifications of recombinant myotube-synthesized human factor IX.</title>
        <authorList>
            <person name="Arruda V.R."/>
            <person name="Hagstrom J.N."/>
            <person name="Deitch J."/>
            <person name="Heiman-Patterson T."/>
            <person name="Camire R.M."/>
            <person name="Chu K."/>
            <person name="Fields P.A."/>
            <person name="Herzog R.W."/>
            <person name="Couto L.B."/>
            <person name="Larson P.J."/>
            <person name="High K.A."/>
        </authorList>
    </citation>
    <scope>SULFATION AT TYR-201</scope>
    <scope>PHOSPHORYLATION AT SER-204</scope>
</reference>
<reference key="32">
    <citation type="journal article" date="2003" name="J. Biol. Chem.">
        <title>Physiological fIXa activation involves a cooperative conformational rearrangement of the 99-loop.</title>
        <authorList>
            <person name="Sichler K."/>
            <person name="Kopetzki E."/>
            <person name="Huber R."/>
            <person name="Bode W."/>
            <person name="Hopfner K.P."/>
            <person name="Brandstetter H."/>
        </authorList>
    </citation>
    <scope>CATALYTIC ACTIVITY</scope>
    <scope>MUTAGENESIS OF TYR-305; LYS-311; TYR-312 AND TYR-391</scope>
</reference>
<reference key="33">
    <citation type="journal article" date="2012" name="J. Biol. Chem.">
        <title>A sequential mechanism for exosite-mediated factor IX activation by factor XIa.</title>
        <authorList>
            <person name="Geng Y."/>
            <person name="Verhamme I.M."/>
            <person name="Messer A."/>
            <person name="Sun M.F."/>
            <person name="Smith S.B."/>
            <person name="Bajaj S.P."/>
            <person name="Gailani D."/>
        </authorList>
    </citation>
    <scope>INTERACTION WITH F11</scope>
    <scope>ACTIVATION</scope>
</reference>
<reference key="34">
    <citation type="journal article" date="2014" name="J. Chromatogr. A">
        <title>Identification of protein O-glycosylation site and corresponding glycans using liquid chromatography-tandem mass spectrometry via mapping accurate mass and retention time shift.</title>
        <authorList>
            <person name="Huang L.J."/>
            <person name="Lin J.H."/>
            <person name="Tsai J.H."/>
            <person name="Chu Y.Y."/>
            <person name="Chen Y.W."/>
            <person name="Chen S.L."/>
            <person name="Chen S.H."/>
        </authorList>
    </citation>
    <scope>GLYCOSYLATION AT THR-85; SER-99; SER-107; THR-205; THR-215 AND THR-225</scope>
    <scope>PHOSPHORYLATION AT SER-204 AND THR-205</scope>
    <scope>IDENTIFICATION BY MASS SPECTROMETRY</scope>
</reference>
<reference key="35">
    <citation type="journal article" date="2014" name="J. Proteomics">
        <title>An enzyme assisted RP-RPLC approach for in-depth analysis of human liver phosphoproteome.</title>
        <authorList>
            <person name="Bian Y."/>
            <person name="Song C."/>
            <person name="Cheng K."/>
            <person name="Dong M."/>
            <person name="Wang F."/>
            <person name="Huang J."/>
            <person name="Sun D."/>
            <person name="Wang L."/>
            <person name="Ye M."/>
            <person name="Zou H."/>
        </authorList>
    </citation>
    <scope>IDENTIFICATION BY MASS SPECTROMETRY [LARGE SCALE ANALYSIS]</scope>
    <source>
        <tissue>Liver</tissue>
    </source>
</reference>
<reference key="36">
    <citation type="journal article" date="2021" name="Int. J. Mol. Sci.">
        <title>Ixodes ricinus Salivary Serpin Iripin-8 Inhibits the Intrinsic Pathway of Coagulation and Complement.</title>
        <authorList>
            <person name="Kotal J."/>
            <person name="Polderdijk S.G.I."/>
            <person name="Langhansova H."/>
            <person name="Ederova M."/>
            <person name="Martins L.A."/>
            <person name="Berankova Z."/>
            <person name="Chlastakova A."/>
            <person name="Hajdusek O."/>
            <person name="Kotsyfakis M."/>
            <person name="Huntington J.A."/>
            <person name="Chmelar J."/>
        </authorList>
    </citation>
    <scope>INTERACTION WITH TICK IRIPIN-8</scope>
</reference>
<reference key="37">
    <citation type="journal article" date="1995" name="J. Biol. Chem.">
        <title>Structure of the metal-free gamma-carboxyglutamic acid-rich membrane binding region of factor IX by two-dimensional NMR spectroscopy.</title>
        <authorList>
            <person name="Freedman S.J."/>
            <person name="Furie B.C."/>
            <person name="Furie B."/>
            <person name="Baleja J.D."/>
        </authorList>
    </citation>
    <scope>STRUCTURE BY NMR OF 47-93</scope>
</reference>
<reference key="38">
    <citation type="journal article" date="1995" name="Biochemistry">
        <title>Structure of the calcium ion-bound gamma-carboxyglutamic acid-rich domain of factor IX.</title>
        <authorList>
            <person name="Freedman S.J."/>
            <person name="Furie B.C."/>
            <person name="Furie B."/>
            <person name="Baleja J.D."/>
        </authorList>
    </citation>
    <scope>STRUCTURE BY NMR OF 47-93</scope>
</reference>
<reference key="39">
    <citation type="journal article" date="1996" name="J. Biol. Chem.">
        <title>Identification of the phospholipid binding site in the vitamin K-dependent blood coagulation protein factor IX.</title>
        <authorList>
            <person name="Freedman S.J."/>
            <person name="Blostein M.D."/>
            <person name="Baleja J.D."/>
            <person name="Jacobs M."/>
            <person name="Furie B.C."/>
            <person name="Furie B."/>
        </authorList>
    </citation>
    <scope>STRUCTURE BY NMR OF 47-93</scope>
</reference>
<reference key="40">
    <citation type="journal article" date="1997" name="Biochemistry">
        <title>Refinement of the NMR solution structure of the gamma-carboxyglutamic acid domain of coagulation factor IX using molecular dynamics simulation with initial Ca2+ positions determined by a genetic algorithm.</title>
        <authorList>
            <person name="Li L."/>
            <person name="Darden T.A."/>
            <person name="Freedman S.J."/>
            <person name="Furie B.C."/>
            <person name="Furie B."/>
            <person name="Baleja J.D."/>
            <person name="Smith H."/>
            <person name="Hiskey R.G."/>
            <person name="Pedersen L.G."/>
        </authorList>
    </citation>
    <scope>STRUCTURE BY NMR OF 47-93</scope>
</reference>
<reference key="41">
    <citation type="journal article" date="1991" name="Biochemistry">
        <title>Sequence-specific 1H NMR assignments, secondary structure, and location of the calcium binding site in the first epidermal growth factor like domain of blood coagulation factor IX.</title>
        <authorList>
            <person name="Huang L.H."/>
            <person name="Cheng H."/>
            <person name="Pardi A."/>
            <person name="Tam J.P."/>
            <person name="Sweeney W.V."/>
        </authorList>
    </citation>
    <scope>STRUCTURE BY NMR OF 91-133</scope>
</reference>
<reference key="42">
    <citation type="journal article" date="1992" name="Protein Sci.">
        <title>The three-dimensional structure of the first EGF-like module of human factor IX: comparison with EGF and TGF-alpha.</title>
        <authorList>
            <person name="Baron M."/>
            <person name="Norman D.G."/>
            <person name="Harvey T.S."/>
            <person name="Handford P.A."/>
            <person name="Mayhew M."/>
            <person name="Tse A.G.D."/>
            <person name="Brownlee G.G."/>
            <person name="Campbell I.D.C."/>
        </authorList>
    </citation>
    <scope>STRUCTURE BY NMR OF 92-130</scope>
    <scope>DISULFIDE BOND</scope>
</reference>
<reference key="43">
    <citation type="journal article" date="1995" name="Cell">
        <title>The structure of a Ca(2+)-binding epidermal growth factor-like domain: its role in protein-protein interactions.</title>
        <authorList>
            <person name="Rao Z."/>
            <person name="Handford P."/>
            <person name="Mayhew M."/>
            <person name="Knott V."/>
            <person name="Brownlee G.G."/>
            <person name="Stuart D."/>
        </authorList>
    </citation>
    <scope>X-RAY CRYSTALLOGRAPHY (1.5 ANGSTROMS) OF 92-130 IN COMPLEX WITH CALCIUM</scope>
    <scope>DISULFIDE BOND</scope>
</reference>
<reference key="44">
    <citation type="journal article" date="1999" name="Structure">
        <title>Coagulation factor IXa: the relaxed conformation of Tyr99 blocks substrate binding.</title>
        <authorList>
            <person name="Hopfner K.-P."/>
            <person name="Lang A."/>
            <person name="Karcher A."/>
            <person name="Sichler K."/>
            <person name="Kopetzki E."/>
            <person name="Brandstetter H."/>
            <person name="Huber R."/>
            <person name="Bode W."/>
            <person name="Engh R.A."/>
        </authorList>
    </citation>
    <scope>X-RAY CRYSTALLOGRAPHY (2.8 ANGSTROMS) OF 133-461 IN COMPLEX WITH CALCIUM</scope>
</reference>
<reference key="45">
    <citation type="journal article" date="2004" name="J. Biol. Chem.">
        <title>Crystal structure of the calcium-stabilized human factor IX Gla domain bound to a conformation-specific anti-factor IX antibody.</title>
        <authorList>
            <person name="Huang M."/>
            <person name="Furie B.C."/>
            <person name="Furie B."/>
        </authorList>
    </citation>
    <scope>X-RAY CRYSTALLOGRAPHY (2.20 ANGSTROMS) OF 47-91 IN COMPLEX WITH CALCIUM</scope>
</reference>
<reference key="46">
    <citation type="journal article" date="2009" name="Structure">
        <title>Structural basis of the cofactor- and substrate-assisted activation of human coagulation factor IXa.</title>
        <authorList>
            <person name="Zogg T."/>
            <person name="Brandstetter H."/>
        </authorList>
    </citation>
    <scope>X-RAY CRYSTALLOGRAPHY (1.50 ANGSTROMS) OF 133-191 AND 227-461 OF MUTANTS PHE-305/THR-311/ALA-365/THR-391 IN COMPLEX WITH CALCIUM AND SYNTHETIC INHIBITOR</scope>
    <scope>ACTIVE SITE</scope>
    <scope>DISULFIDE BOND</scope>
    <scope>SUBUNIT</scope>
    <scope>PROTEOLYTIC CLEAVAGE</scope>
</reference>
<reference key="47">
    <citation type="journal article" date="2010" name="J. Med. Chem.">
        <title>Studies of benzothiophene template as potent factor IXa (FIXa) inhibitors in thrombosis.</title>
        <authorList>
            <person name="Wang S."/>
            <person name="Beck R."/>
            <person name="Blench T."/>
            <person name="Burd A."/>
            <person name="Buxton S."/>
            <person name="Malic M."/>
            <person name="Ayele T."/>
            <person name="Shaikh S."/>
            <person name="Chahwala S."/>
            <person name="Chander C."/>
            <person name="Holland R."/>
            <person name="Merette S."/>
            <person name="Zhao L."/>
            <person name="Blackney M."/>
            <person name="Watts A."/>
        </authorList>
    </citation>
    <scope>X-RAY CRYSTALLOGRAPHY (1.90 ANGSTROMS) OF 133-461 IN COMPLEX WITH CALCIUM</scope>
    <scope>FUNCTION</scope>
    <scope>CATALYTIC ACTIVITY</scope>
    <scope>SUBUNIT</scope>
    <scope>DISULFIDE BOND</scope>
</reference>
<reference key="48">
    <citation type="journal article" date="2010" name="J. Med. Chem.">
        <title>Structure based drug design: development of potent and selective factor IXa (FIXa) inhibitors.</title>
        <authorList>
            <person name="Wang S."/>
            <person name="Beck R."/>
            <person name="Burd A."/>
            <person name="Blench T."/>
            <person name="Marlin F."/>
            <person name="Ayele T."/>
            <person name="Buxton S."/>
            <person name="Dagostin C."/>
            <person name="Malic M."/>
            <person name="Joshi R."/>
            <person name="Barry J."/>
            <person name="Sajad M."/>
            <person name="Cheung C."/>
            <person name="Shaikh S."/>
            <person name="Chahwala S."/>
            <person name="Chander C."/>
            <person name="Baumgartner C."/>
            <person name="Holthoff H.P."/>
            <person name="Murray E."/>
            <person name="Blackney M."/>
            <person name="Giddings A."/>
        </authorList>
    </citation>
    <scope>X-RAY CRYSTALLOGRAPHY (2.62 ANGSTROMS) OF 133-188 AND 227-461 IN COMPLEX WITH CALCIUM</scope>
    <scope>FUNCTION</scope>
    <scope>CATALYTIC ACTIVITY</scope>
    <scope>SUBUNIT</scope>
    <scope>DISULFIDE BOND</scope>
</reference>
<reference key="49">
    <citation type="journal article" date="2010" name="Proc. Natl. Acad. Sci. U.S.A.">
        <title>Molecular basis of factor IXa recognition by heparin-activated antithrombin revealed by a 1.7-A structure of the ternary complex.</title>
        <authorList>
            <person name="Johnson D.J."/>
            <person name="Langdown J."/>
            <person name="Huntington J.A."/>
        </authorList>
    </citation>
    <scope>X-RAY CRYSTALLOGRAPHY (1.70 ANGSTROMS) OF 131-188 AND 227-461 IN COMPLEX WITH SERPINC1 AND CALCIUM</scope>
    <scope>DISULFIDE BOND</scope>
    <scope>PROTEOLYTIC CLEAVAGE</scope>
    <scope>SUBUNIT</scope>
</reference>
<reference key="50">
    <citation type="journal article" date="1989" name="EMBO J.">
        <title>Molecular pathology of haemophilia B.</title>
        <authorList>
            <person name="Green P.M."/>
            <person name="Bentley D.R."/>
            <person name="Mibashan R.S."/>
            <person name="Nilsson I.M."/>
            <person name="Giannelli F."/>
        </authorList>
    </citation>
    <scope>MOLECULAR PATHOLOGY OF HEMB B</scope>
</reference>
<reference key="51">
    <citation type="journal article" date="1992" name="FASEB J.">
        <title>Assessing the underlying pattern of human germline mutations: lessons from the factor IX gene.</title>
        <authorList>
            <person name="Sommer S.S."/>
        </authorList>
    </citation>
    <scope>REVIEW ON HEMB VARIANTS</scope>
</reference>
<reference key="52">
    <citation type="journal article" date="1993" name="Nucleic Acids Res.">
        <title>Haemophilia B: database of point mutations and short additions and deletions -- fourth edition, 1993.</title>
        <authorList>
            <person name="Giannelli F."/>
            <person name="Green P.M."/>
            <person name="High K.A."/>
            <person name="Sommer S."/>
            <person name="Poon M.-C."/>
            <person name="Ludwig M."/>
            <person name="Schwaab R."/>
            <person name="Reitsma P.H."/>
            <person name="Goossens M."/>
            <person name="Yoshioka A."/>
            <person name="Brownlee G.G."/>
        </authorList>
    </citation>
    <scope>REVIEW ON HEMB VARIANTS</scope>
</reference>
<reference key="53">
    <citation type="journal article" date="1983" name="Proc. Natl. Acad. Sci. U.S.A.">
        <title>Identification of the molecular defect in factor IX Chapel Hill: substitution of histidine for arginine at position 145.</title>
        <authorList>
            <person name="Noyes C.M."/>
            <person name="Griffith M.J."/>
            <person name="Roberts H.R."/>
            <person name="Lundblad R.L."/>
        </authorList>
    </citation>
    <scope>VARIANT HEMB HIS-191</scope>
</reference>
<reference key="54">
    <citation type="journal article" date="1986" name="Cell">
        <title>Defective propeptide processing of blood clotting factor IX caused by mutation of arginine to glutamine at position -4.</title>
        <authorList>
            <person name="Bentley A.K."/>
            <person name="Rees D.J."/>
            <person name="Rizza C."/>
            <person name="Brownlee G.G."/>
        </authorList>
    </citation>
    <scope>VARIANT HEMB GLN-43</scope>
    <scope>CHARACTERIZATION OF VARIANT HEMB GLN-43</scope>
</reference>
<reference key="55">
    <citation type="journal article" date="1987" name="Blood">
        <title>Factor IXAlabama: a point mutation in a clotting protein results in hemophilia B.</title>
        <authorList>
            <person name="Davis L.M."/>
            <person name="McGraw R.A."/>
            <person name="Ware J.L."/>
            <person name="Roberts H.R."/>
            <person name="Stafford D.W."/>
        </authorList>
    </citation>
    <scope>VARIANT HEMB GLY-93</scope>
</reference>
<reference key="56">
    <citation type="journal article" date="1988" name="Blood">
        <title>Genetic defect responsible for the dysfunctional protein: factor IX (Long Beach).</title>
        <authorList>
            <person name="Ware J."/>
            <person name="Davis L."/>
            <person name="Frazier D."/>
            <person name="Bajaj S.P."/>
            <person name="Stafford D.W."/>
        </authorList>
    </citation>
    <scope>VARIANT HEMB THR-443</scope>
</reference>
<reference key="57">
    <citation type="journal article" date="1988" name="J. Biochem.">
        <title>Blood clotting factor IX Niigata: substitution of alanine-390 by valine in the catalytic domain.</title>
        <authorList>
            <person name="Sugimoto M."/>
            <person name="Miyata T."/>
            <person name="Kawabata S."/>
            <person name="Yoshioka A."/>
            <person name="Fukui H."/>
            <person name="Takahashi H."/>
            <person name="Iwanaga S."/>
        </authorList>
    </citation>
    <scope>VARIANT HEMB VAL-436</scope>
</reference>
<reference key="58">
    <citation type="journal article" date="1989" name="Blood">
        <title>Functional consequences of an arginine180 to glutamine mutation in factor IX Hilo.</title>
        <authorList>
            <person name="Monroe D.M."/>
            <person name="McCord D.M."/>
            <person name="Huang M.N."/>
            <person name="High K.A."/>
            <person name="Lundblad R.L."/>
            <person name="Kasper C.K."/>
            <person name="Roberts H.R."/>
        </authorList>
    </citation>
    <scope>VARIANT HEMB GLN-226</scope>
</reference>
<reference key="59">
    <citation type="journal article" date="1989" name="Genomics">
        <title>Mutations in the catalytic domain of human coagulation factor IX: rapid characterization by direct genomic sequencing of DNA fragments displaying an altered melting behavior.</title>
        <authorList>
            <person name="Attree O."/>
            <person name="Vidaud D."/>
            <person name="Vidaud M."/>
            <person name="Amselem S."/>
            <person name="Lavergne J.-M."/>
            <person name="Goossens M."/>
        </authorList>
    </citation>
    <scope>VARIANT HEMB ARG-442</scope>
</reference>
<reference key="60">
    <citation type="journal article" date="1989" name="Am. J. Hum. Genet.">
        <title>Functionally important regions of the factor IX gene have a low rate of polymorphism and a high rate of mutation in the dinucleotide CpG.</title>
        <authorList>
            <person name="Koeberl D.D."/>
            <person name="Bottema C.D."/>
            <person name="Buerstedde J.-M."/>
            <person name="Sommer S.S."/>
        </authorList>
    </citation>
    <scope>VARIANTS HEMB GLN-75; ASP-79; TRP-268; THR-279; SER-306; MET-342; ARG-357 AND ARG-453</scope>
    <scope>VARIANT PHE-7</scope>
</reference>
<reference key="61">
    <citation type="journal article" date="1989" name="Br. J. Haematol.">
        <title>Factor IX Cardiff: a variant factor IX protein that shows abnormal activation is caused by an arginine to cysteine substitution at position 145.</title>
        <authorList>
            <person name="Liddell M.B."/>
            <person name="Peake I.R."/>
            <person name="Taylor S.A."/>
            <person name="Lillicrap D.P."/>
            <person name="Giddings J.C."/>
            <person name="Bloom A.L."/>
        </authorList>
    </citation>
    <scope>VARIANT HEMB CYS-191</scope>
</reference>
<reference key="62">
    <citation type="journal article" date="1989" name="J. Biochem.">
        <title>Blood clotting factor IX Kashihara: amino acid substitution of valine-182 by phenylalanine.</title>
        <authorList>
            <person name="Sakai T."/>
            <person name="Yoshioka A."/>
            <person name="Yamamoto K."/>
            <person name="Niinomi K."/>
            <person name="Fujimura Y."/>
            <person name="Fukui H."/>
            <person name="Miyata T."/>
            <person name="Iwanaga S."/>
        </authorList>
    </citation>
    <scope>VARIANT HEMB PHE-228</scope>
</reference>
<reference key="63">
    <citation type="journal article" date="1989" name="J. Biol. Chem.">
        <title>Factor IX San Dimas. Substitution of glutamine for Arg-4 in the propeptide leads to incomplete gamma-carboxylation and altered phospholipid binding properties.</title>
        <authorList>
            <person name="Ware J."/>
            <person name="Diuguid D.L."/>
            <person name="Liebman H.A."/>
            <person name="Rabiet M.J."/>
            <person name="Kasper C.K."/>
            <person name="Furie B.C."/>
            <person name="Furie B."/>
            <person name="Stafford D.W."/>
        </authorList>
    </citation>
    <scope>VARIANT HEMB GLN-43</scope>
</reference>
<reference key="64">
    <citation type="journal article" date="1989" name="J. Clin. Invest.">
        <title>Three point mutations in the factor IX genes of five hemophilia B patients. Identification strategy using localization by altered epitopes in their hemophilic proteins.</title>
        <authorList>
            <person name="Chen S.H."/>
            <person name="Thompson A.R."/>
            <person name="Zhang M."/>
            <person name="Scott C.R."/>
        </authorList>
    </citation>
    <scope>VARIANTS HEMB LYS-73; SER-106 AND GLN-294</scope>
</reference>
<reference key="65">
    <citation type="journal article" date="1990" name="Thromb. Haemost.">
        <title>Factor IX Chongqing: a new mutation in the calcium-binding domain of factor IX resulting in severe hemophilia B.</title>
        <authorList>
            <person name="Wang N.S."/>
            <person name="Zhang M."/>
            <person name="Thompson A.R."/>
            <person name="Chen S.H."/>
        </authorList>
    </citation>
    <scope>VARIANT HEMB VAL-73</scope>
</reference>
<reference key="66">
    <citation type="journal article" date="1990" name="Blood">
        <title>Factor IX New London: substitution of proline for glutamine at position 50 causes severe hemophilia B.</title>
        <authorList>
            <person name="Lozier J.N."/>
            <person name="Monroe D.M."/>
            <person name="Stanfield-Oakley S."/>
            <person name="Lin S.W."/>
            <person name="Smith K.J."/>
            <person name="Roberts H.R."/>
            <person name="High K.A."/>
        </authorList>
    </citation>
    <scope>VARIANT HEMB PRO-96</scope>
</reference>
<reference key="67">
    <citation type="journal article" date="1990" name="Br. J. Haematol.">
        <title>A mutation adjacent to the beta cleavage site of factor IX (valine 182 to leucine) results in mild haemophilia Bm.</title>
        <authorList>
            <person name="Taylor S.A."/>
            <person name="Liddell M.B."/>
            <person name="Peake I.R."/>
            <person name="Bloom A.L."/>
            <person name="Lillicrap D.P."/>
        </authorList>
    </citation>
    <scope>VARIANT HEMB LEU-228</scope>
</reference>
<reference key="68">
    <citation type="journal article" date="1990" name="J. Biol. Chem.">
        <title>Mutations in hemophilia Bm occur at the Arg180-Val activation site or in the catalytic domain of factor IX.</title>
        <authorList>
            <person name="Bertina R.M."/>
            <person name="van der Linden I.K."/>
            <person name="Mannucci P.M."/>
            <person name="Reinalda-Poot H.H."/>
            <person name="Cupers R."/>
            <person name="Poort S.R."/>
            <person name="Reitsma P.H."/>
        </authorList>
    </citation>
    <scope>VARIANTS HEMB GLN-226; TRP-226; PHE-227 AND THR-414</scope>
</reference>
<reference key="69">
    <citation type="journal article" date="1991" name="Biochemistry">
        <title>Factor IX Amagasaki: a new mutation in the catalytic domain resulting in the loss of both coagulant and esterase activities.</title>
        <authorList>
            <person name="Miyata T."/>
            <person name="Sakai T."/>
            <person name="Sugimoto M."/>
            <person name="Naka H."/>
            <person name="Yamamoto K."/>
            <person name="Yoshioka A."/>
            <person name="Fukui H."/>
            <person name="Mitsui K."/>
            <person name="Kamiya K."/>
            <person name="Umeyama H."/>
            <person name="Iwanaga S."/>
        </authorList>
    </citation>
    <scope>VARIANT HEMB GLU-357</scope>
</reference>
<reference key="70">
    <citation type="journal article" date="1991" name="Nucleic Acids Res.">
        <title>Isoleucine-397 is changed to threonine in two females with hemophilia B.</title>
        <authorList>
            <person name="Sarkar G."/>
            <person name="Cassady J.D."/>
            <person name="Pyeritz R.E."/>
            <person name="Gilchrist G.S."/>
            <person name="Sommer S.S."/>
        </authorList>
    </citation>
    <scope>VARIANT HEMB THR-443</scope>
</reference>
<reference key="71">
    <citation type="journal article" date="1992" name="Blood">
        <title>Hemophilia B caused by five different nondeletion mutations in the protease domain of factor IX.</title>
        <authorList>
            <person name="Ludwig M."/>
            <person name="Sabharwal A.K."/>
            <person name="Brackmann H.H."/>
            <person name="Olek K."/>
            <person name="Smith K.J."/>
            <person name="Birktoft J.J."/>
            <person name="Bajaj S.P."/>
        </authorList>
    </citation>
    <scope>VARIANTS HEMB VAL-291; GLN-294; HIS-410; GLY-411 AND ILE-411</scope>
</reference>
<reference key="72">
    <citation type="journal article" date="1992" name="Thromb. Haemost.">
        <title>Characterization of the original Christmas disease mutation (cysteine 206--&gt;serine): from clinical recognition to molecular pathogenesis.</title>
        <authorList>
            <person name="Taylor S.A."/>
            <person name="Duffin J."/>
            <person name="Cameron C."/>
            <person name="Teitel J."/>
            <person name="Garvey B."/>
            <person name="Lillicrap D.P."/>
        </authorList>
    </citation>
    <scope>VARIANT HEMB SER-252</scope>
</reference>
<reference key="73">
    <citation type="journal article" date="1993" name="Hum. Mutat.">
        <title>Single-strand conformation polymorphism (SSCP) analysis of the molecular pathology of hemophilia B.</title>
        <authorList>
            <person name="David D."/>
            <person name="Rosa H.A.V."/>
            <person name="Pemberton S."/>
            <person name="Diniz M.J."/>
            <person name="Campos M."/>
            <person name="Lavinha J."/>
        </authorList>
    </citation>
    <scope>VARIANTS HEMB ARG-253; GLN-294; GLN-379; PRO-426 AND ILE-TYR-THR-445 INS</scope>
</reference>
<reference key="74">
    <citation type="journal article" date="1994" name="Hum. Genet.">
        <title>Factor IX gene mutations causing haemophilia B: comparison of SSC screening versus systematic DNA sequencing and diagnostic applications.</title>
        <authorList>
            <person name="Aguilar-Martinez P."/>
            <person name="Romey M.-C."/>
            <person name="Schved J.-F."/>
            <person name="Gris J.-C."/>
            <person name="Demaille J."/>
            <person name="Claustres M."/>
        </authorList>
    </citation>
    <scope>VARIANTS HEMB HIS-191; GLY-226; THR-279; GLN-379; GLU-419 AND GLN-449</scope>
</reference>
<reference key="75">
    <citation type="journal article" date="1994" name="Hum. Mutat.">
        <title>A novel mutation (Val-373 to Glu) in the catalytic domain of factor IX, resulting in moderately/severe hemophilia B in a southern French patient.</title>
        <authorList>
            <person name="Aguilar-Martinez P."/>
            <person name="Romey M.-C."/>
            <person name="Gris J.-C."/>
            <person name="Schved J.-F."/>
            <person name="Demaille J."/>
            <person name="Claustres M."/>
        </authorList>
    </citation>
    <scope>VARIANT HEMB GLU-419</scope>
</reference>
<reference key="76">
    <citation type="journal article" date="1994" name="Hum. Mutat.">
        <title>Identification of mutations in four hemophilia B patients of Turkish origin, including a novel deletion of base 6411.</title>
        <authorList>
            <person name="Caglayan S.H."/>
            <person name="Vielhaber E."/>
            <person name="Guersel T."/>
            <person name="Aktuglu G."/>
            <person name="Sommer S.S."/>
        </authorList>
    </citation>
    <scope>VARIANTS HEMB GLN-294 AND ARG-413</scope>
</reference>
<reference key="77">
    <citation type="journal article" date="1996" name="J. Clin. Invest.">
        <title>A mutation in the propeptide of factor IX leads to warfarin sensitivity by a novel mechanism.</title>
        <authorList>
            <person name="Chu K."/>
            <person name="Wu S.M."/>
            <person name="Stanley T."/>
            <person name="Stafford D.W."/>
            <person name="High K.A."/>
        </authorList>
    </citation>
    <scope>VARIANT WARFS THR-37</scope>
    <scope>CHARACTERIZATION OF VARIANT WARFS THR-37</scope>
</reference>
<reference key="78">
    <citation type="journal article" date="1991" name="Am. J. Hum. Genet.">
        <title>Missense mutations and evolutionary conservation of amino acids: evidence that many of the amino acids in factor IX function as 'spacer' elements.</title>
        <authorList>
            <person name="Bottema C.D."/>
            <person name="Ketterling R.P."/>
            <person name="Ii S."/>
            <person name="Yoon H.S."/>
            <person name="Phillips J.A. III"/>
            <person name="Sommer S.S."/>
        </authorList>
    </citation>
    <scope>VARIANT HEMB ILE-30</scope>
</reference>
<reference key="79">
    <citation type="journal article" date="1992" name="Am. J. Hum. Genet.">
        <title>Parental origin of factor IX gene mutations, and their distribution in the gene.</title>
        <authorList>
            <person name="Ludwig M."/>
            <person name="Grimm T."/>
            <person name="Brackmann H.H."/>
            <person name="Olek K."/>
        </authorList>
    </citation>
    <scope>VARIANT HEMB SER-71</scope>
</reference>
<reference key="80">
    <citation type="journal article" date="1994" name="Nucleic Acids Res.">
        <title>Haemophilia B: database of point mutations and short additions and deletions, fifth edition, 1994.</title>
        <authorList>
            <person name="Giannelli F."/>
            <person name="Green P.M."/>
            <person name="Sommer S.S."/>
            <person name="Lillicrap D.P."/>
            <person name="Ludwig M."/>
            <person name="Schwaab R."/>
            <person name="Reitsma P.H."/>
            <person name="Goossens M."/>
            <person name="Yoshioka A."/>
            <person name="Brownlee G.G."/>
        </authorList>
    </citation>
    <scope>VARIANTS HEMB ASN-17; ARG-28; ASN-45; ILE-48; ALA-53; GLY-54; CYS-55; ALA-58; ARG-58; VAL-66; LYS-67; CYS-91; ARG-102; ASN-110; THR-136; SER-139; ASP-139; GLU-160; HIS-167; ARG-178; ASP-227; GLU-253; THR-265; GLY-294; HIS-333; LYS-342; ASP-351; CYS-356; GLU-362; ASP-366; TYR-382; PHE-390; LYS-394; ARG-431 AND SER-432</scope>
</reference>
<reference key="81">
    <citation type="journal article" date="1995" name="Hum. Mutat.">
        <title>Twenty-five novel mutations of the factor IX gene in haemophilia B.</title>
        <authorList>
            <person name="Wulff K."/>
            <person name="Schroeder W."/>
            <person name="Wehnert M."/>
            <person name="Herrmann F.H."/>
        </authorList>
    </citation>
    <scope>VARIANTS HEMB TRP-178; ASP-283; GLN-321 AND SER-407</scope>
</reference>
<reference key="82">
    <citation type="journal article" date="1997" name="Br. J. Haematol.">
        <title>Missense mutations at ALA-10 in the factor IX propeptide: an insignificant variant in normal life but a decisive cause of bleeding during oral anticoagulant therapy.</title>
        <authorList>
            <person name="Oldenburg J."/>
            <person name="Quenzel E.M."/>
            <person name="Harbrecht U."/>
            <person name="Fregin A."/>
            <person name="Kress W."/>
            <person name="Mueller C.R."/>
            <person name="Hertfelder H.J."/>
            <person name="Schwaab R."/>
            <person name="Brackmann H.H."/>
            <person name="Hanfland P."/>
        </authorList>
    </citation>
    <scope>VARIANTS WARFS THR-37 AND VAL-37</scope>
</reference>
<reference key="83">
    <citation type="journal article" date="1997" name="Hum. Mutat.">
        <title>Mutations associated with hemophilia B in Turkish patients.</title>
        <authorList>
            <person name="Caglayan S.H."/>
            <person name="Goekmen Y."/>
            <person name="Aktuglu G."/>
            <person name="Guergey A."/>
            <person name="Sommer S.S."/>
        </authorList>
    </citation>
    <scope>VARIANTS HEMB LYS-113; MET-342; ARG-413 AND VAL-424</scope>
</reference>
<reference key="84">
    <citation type="journal article" date="1998" name="Am. J. Hematol.">
        <title>Hemophilia B in a female carrier due to skewed inactivation of the normal X-chromosome.</title>
        <authorList>
            <person name="Chan V."/>
            <person name="Chan V.W.Y."/>
            <person name="Yip B."/>
            <person name="Chim C.S."/>
            <person name="Chan T.K."/>
        </authorList>
    </citation>
    <scope>VARIANT HEMB PRO-397</scope>
</reference>
<reference key="85">
    <citation type="journal article" date="1998" name="Hum. Mutat. Suppl.">
        <title>Five novel factor IX mutations in unrelated hemophilia B patients.</title>
        <authorList>
            <person name="David D."/>
            <person name="Moreira I."/>
            <person name="Morais S."/>
            <person name="de Deus G."/>
        </authorList>
    </citation>
    <scope>VARIANTS HEMB ARG-119 AND THR-454</scope>
</reference>
<reference key="86">
    <citation type="journal article" date="1998" name="Hum. Mutat.">
        <title>Germline mutations in Peruvian patients with hemophilia B: pattern of mutation in Amerindians is similar to the putative endogenous germline pattern.</title>
        <authorList>
            <person name="Heit J.A."/>
            <person name="Thorland E.C."/>
            <person name="Ketterling R.P."/>
            <person name="Lind T.J."/>
            <person name="Daniels T.M."/>
            <person name="Zapata R.E."/>
            <person name="Ordonez S.M."/>
            <person name="Kasper C.K."/>
            <person name="Sommer S.S."/>
        </authorList>
    </citation>
    <scope>VARIANTS HEMB GLN-43; TRP-43; THR-46; SER-106; CYS-115; PHE-155; GLN-379; GLU-387; VAL-432 AND CYS-450</scope>
</reference>
<reference key="87">
    <citation type="journal article" date="1999" name="Acta Biochim. Pol.">
        <title>Molecular analysis of hemophilia B in Poland: 12 novel mutations of the factor IX gene.</title>
        <authorList>
            <person name="Wulff K."/>
            <person name="Bykowska K."/>
            <person name="Lopaciuk S."/>
            <person name="Herrmann F.H."/>
        </authorList>
    </citation>
    <scope>VARIANTS HEMB</scope>
</reference>
<reference key="88">
    <citation type="journal article" date="1999" name="Hum. Mutat.">
        <title>Identification of twenty-one new mutations in the factor IX gene by SSCP analysis.</title>
        <authorList>
            <person name="Montejo J.M."/>
            <person name="Magallon M."/>
            <person name="Tizzano E."/>
            <person name="Solera J."/>
        </authorList>
    </citation>
    <scope>VARIANTS HEMB</scope>
    <scope>VARIANTS HEMB PRO-49; SER-97; ARG-101; SER-108; SER-112; GLU-125; TRP-363; SER-396; THR-404; THR-430; GLY-431; LYS-433 AND ALA-433</scope>
</reference>
<reference key="89">
    <citation type="journal article" date="1999" name="Nat. Genet.">
        <title>Characterization of single-nucleotide polymorphisms in coding regions of human genes.</title>
        <authorList>
            <person name="Cargill M."/>
            <person name="Altshuler D."/>
            <person name="Ireland J."/>
            <person name="Sklar P."/>
            <person name="Ardlie K."/>
            <person name="Patil N."/>
            <person name="Shaw N."/>
            <person name="Lane C.R."/>
            <person name="Lim E.P."/>
            <person name="Kalyanaraman N."/>
            <person name="Nemesh J."/>
            <person name="Ziaugra L."/>
            <person name="Friedland L."/>
            <person name="Rolfe A."/>
            <person name="Warrington J."/>
            <person name="Lipshutz R."/>
            <person name="Daley G.Q."/>
            <person name="Lander E.S."/>
        </authorList>
    </citation>
    <scope>VARIANT ALA-194</scope>
</reference>
<reference key="90">
    <citation type="journal article" date="1999" name="Nat. Genet.">
        <authorList>
            <person name="Cargill M."/>
            <person name="Altshuler D."/>
            <person name="Ireland J."/>
            <person name="Sklar P."/>
            <person name="Ardlie K."/>
            <person name="Patil N."/>
            <person name="Shaw N."/>
            <person name="Lane C.R."/>
            <person name="Lim E.P."/>
            <person name="Kalyanaraman N."/>
            <person name="Nemesh J."/>
            <person name="Ziaugra L."/>
            <person name="Friedland L."/>
            <person name="Rolfe A."/>
            <person name="Warrington J."/>
            <person name="Lipshutz R."/>
            <person name="Daley G.Q."/>
            <person name="Lander E.S."/>
        </authorList>
    </citation>
    <scope>ERRATUM OF PUBMED:10391209</scope>
</reference>
<reference key="91">
    <citation type="journal article" date="2000" name="Br. J. Haematol.">
        <title>Factor IX gene sequencing by a simple and sensitive 15-hour procedure for haemophilia B diagnosis: identification of two novel mutations.</title>
        <authorList>
            <person name="Vidal F."/>
            <person name="Farssac E."/>
            <person name="Altisent C."/>
            <person name="Puig L."/>
            <person name="Gallardo D."/>
        </authorList>
    </citation>
    <scope>VARIANTS HEMB CYS-169 AND THR-333</scope>
</reference>
<reference key="92">
    <citation type="journal article" date="2003" name="Br. J. Haematol.">
        <title>Molecular pathology of haemophilia B in Turkish patients: identification of a large deletion and 33 independent point mutations.</title>
        <authorList>
            <person name="Onay U.V."/>
            <person name="Kavakli K."/>
            <person name="Kilinc Y."/>
            <person name="Gurgey A."/>
            <person name="Aktuglu G."/>
            <person name="Kemahli S."/>
            <person name="Ozbek U."/>
            <person name="Caglayan S.H."/>
        </authorList>
    </citation>
    <scope>VARIANTS HEMB TYR-28; LEU-43; GLN-43; SER-52; ASP-106; LYS-124; TYR-134; GLN-226; GLY-226; TRP-226; LYS-241; TYR-252; GLN-294; PHE-316; ARG-318; GLY-379; ILE-383; PHE-383; ILE-395; PHE-396; ARG-407 AND GLU-412</scope>
</reference>
<reference key="93">
    <citation type="journal article" date="2003" name="Haematologica">
        <title>Molecular analyses in hemophilia B families: identification of six new mutations in the factor IX gene.</title>
        <authorList>
            <person name="Espinos C."/>
            <person name="Casana P."/>
            <person name="Haya S."/>
            <person name="Cid A.R."/>
            <person name="Aznar J.A."/>
        </authorList>
    </citation>
    <scope>VARIANTS HEMB TRP-43; ARG-84; ARG-125; VAL-125; PHE-170; ARG-302; MET-342; LEU-344; LEU-395; THR-414; TYR-435; GLU-442 AND TRP-449</scope>
</reference>
<reference key="94">
    <citation type="journal article" date="2009" name="N. Engl. J. Med.">
        <title>X-linked thrombophilia with a mutant factor IX (factor IX Padua).</title>
        <authorList>
            <person name="Simioni P."/>
            <person name="Tormene D."/>
            <person name="Tognin G."/>
            <person name="Gavasso S."/>
            <person name="Bulato C."/>
            <person name="Iacobelli N.P."/>
            <person name="Finn J.D."/>
            <person name="Spiezia L."/>
            <person name="Radu C."/>
            <person name="Arruda V.R."/>
        </authorList>
    </citation>
    <scope>VARIANT THPH8 LEU-384</scope>
    <scope>CHARACTERIZATION OF VARIANT THPH8 LEU-384</scope>
    <scope>FUNCTION</scope>
    <scope>SUBCELLULAR LOCATION</scope>
    <scope>TISSUE SPECIFICITY</scope>
</reference>
<reference key="95">
    <citation type="journal article" date="2015" name="Haemophilia">
        <title>Genetic determinants of immunogenicity to factor IX during the treatment of haemophilia B.</title>
        <authorList>
            <person name="Saini S."/>
            <person name="Hamasaki-Katagiri N."/>
            <person name="Pandey G.S."/>
            <person name="Yanover C."/>
            <person name="Guelcher C."/>
            <person name="Simhadri V.L."/>
            <person name="Dandekar S."/>
            <person name="Guerrera M.F."/>
            <person name="Kimchi-Sarfaty C."/>
            <person name="Sauna Z.E."/>
        </authorList>
    </citation>
    <scope>VARIANTS HEMB ALA-194 AND HIS-241</scope>
</reference>
<reference key="96">
    <citation type="journal article" date="2014" name="Haemophilia">
        <title>Comprehensive analysis of phenotypes and genetics in 21 Chinese families with haemophilia B: characterization of five novel mutations.</title>
        <authorList>
            <person name="Guo Z.P."/>
            <person name="Yang L.H."/>
            <person name="Qin X.Y."/>
            <person name="Liu X.E."/>
            <person name="Chen J.F."/>
            <person name="Zhang Y.F."/>
        </authorList>
    </citation>
    <scope>VARIANTS HEMB SER-20; TYR-28; SER-46; ASP-54; GLU-58; ARG-84; HIS-138; GLN-226; ILE-284 DEL; MET-296; LYS-328; TYR-328; THR-414 AND TYR-THR-LYS-VAL-447 INS</scope>
    <scope>CHARACTERIZATION OF VARIANTS HEMB SER-20; TYR-28; SER-46; ASP-54; GLU-58; ARG-84; HIS-138; GLN-226; ILE-284 DEL; MET-296; LYS-328; TYR-328; THR-414 AND TYR-THR-LYS-VAL-447 INS</scope>
</reference>
<reference key="97">
    <citation type="journal article" date="2018" name="Ann. Hematol.">
        <title>Variants in FIX propeptide associated with vitamin K antagonist hypersensitivity: functional analysis and additional data confirming the common founder mutations.</title>
        <authorList>
            <person name="Pezeshkpoor B."/>
            <person name="Czogalla K.J."/>
            <person name="Caspers M."/>
            <person name="Berkemeier A.C."/>
            <person name="Liphardt K."/>
            <person name="Ghosh S."/>
            <person name="Kellner M."/>
            <person name="Ulrich S."/>
            <person name="Pavlova A."/>
            <person name="Oldenburg J."/>
        </authorList>
    </citation>
    <scope>VARIANTS WARFS THR-37 AND VAL-37</scope>
    <scope>CHARACTERIZATION OF VARIANTS WARFS THR-37 AND VAL-37</scope>
</reference>
<keyword id="KW-0002">3D-structure</keyword>
<keyword id="KW-0025">Alternative splicing</keyword>
<keyword id="KW-0094">Blood coagulation</keyword>
<keyword id="KW-0106">Calcium</keyword>
<keyword id="KW-0165">Cleavage on pair of basic residues</keyword>
<keyword id="KW-0903">Direct protein sequencing</keyword>
<keyword id="KW-0225">Disease variant</keyword>
<keyword id="KW-1015">Disulfide bond</keyword>
<keyword id="KW-0245">EGF-like domain</keyword>
<keyword id="KW-0301">Gamma-carboxyglutamic acid</keyword>
<keyword id="KW-0325">Glycoprotein</keyword>
<keyword id="KW-0355">Hemophilia</keyword>
<keyword id="KW-0356">Hemostasis</keyword>
<keyword id="KW-0378">Hydrolase</keyword>
<keyword id="KW-0379">Hydroxylation</keyword>
<keyword id="KW-0460">Magnesium</keyword>
<keyword id="KW-0479">Metal-binding</keyword>
<keyword id="KW-0582">Pharmaceutical</keyword>
<keyword id="KW-0597">Phosphoprotein</keyword>
<keyword id="KW-0645">Protease</keyword>
<keyword id="KW-1267">Proteomics identification</keyword>
<keyword id="KW-1185">Reference proteome</keyword>
<keyword id="KW-0677">Repeat</keyword>
<keyword id="KW-0964">Secreted</keyword>
<keyword id="KW-0720">Serine protease</keyword>
<keyword id="KW-0732">Signal</keyword>
<keyword id="KW-0765">Sulfation</keyword>
<keyword id="KW-0792">Thrombophilia</keyword>
<keyword id="KW-0865">Zymogen</keyword>
<proteinExistence type="evidence at protein level"/>
<organism>
    <name type="scientific">Homo sapiens</name>
    <name type="common">Human</name>
    <dbReference type="NCBI Taxonomy" id="9606"/>
    <lineage>
        <taxon>Eukaryota</taxon>
        <taxon>Metazoa</taxon>
        <taxon>Chordata</taxon>
        <taxon>Craniata</taxon>
        <taxon>Vertebrata</taxon>
        <taxon>Euteleostomi</taxon>
        <taxon>Mammalia</taxon>
        <taxon>Eutheria</taxon>
        <taxon>Euarchontoglires</taxon>
        <taxon>Primates</taxon>
        <taxon>Haplorrhini</taxon>
        <taxon>Catarrhini</taxon>
        <taxon>Hominidae</taxon>
        <taxon>Homo</taxon>
    </lineage>
</organism>
<protein>
    <recommendedName>
        <fullName evidence="81">Coagulation factor IX</fullName>
        <ecNumber evidence="13 29 30 42">3.4.21.22</ecNumber>
    </recommendedName>
    <alternativeName>
        <fullName>Christmas factor</fullName>
    </alternativeName>
    <alternativeName>
        <fullName>Plasma thromboplastin component</fullName>
        <shortName>PTC</shortName>
    </alternativeName>
    <component>
        <recommendedName>
            <fullName>Coagulation factor IXa light chain</fullName>
        </recommendedName>
    </component>
    <component>
        <recommendedName>
            <fullName>Coagulation factor IXa heavy chain</fullName>
        </recommendedName>
    </component>
</protein>
<accession>P00740</accession>
<accession>A8K9N4</accession>
<accession>F2RM36</accession>
<accession>Q5FBE1</accession>
<accession>Q5JYJ8</accession>
<comment type="function">
    <text evidence="23 26 29 30 42 70">Factor IX is a vitamin K-dependent plasma protein that participates in the intrinsic pathway of blood coagulation by converting factor X to its active form in the presence of Ca(2+) ions, phospholipids, and factor VIIIa.</text>
</comment>
<comment type="catalytic activity">
    <reaction evidence="13 29 30 42">
        <text>Selective cleavage of Arg-|-Ile bond in factor X to form factor Xa.</text>
        <dbReference type="EC" id="3.4.21.22"/>
    </reaction>
</comment>
<comment type="subunit">
    <text evidence="9 27 28 29 30 33 42 55">Heterodimer of a light chain and a heavy chain; disulfide-linked (PubMed:20080729, PubMed:20121197, PubMed:20121198). Interacts (inactive and activated) with F11 (activated) in calcium-dependent manner (PubMed:22961984). Interacts with SERPINC1 (PubMed:20080729). Interacts (activated) with iripin-8, a serine protease inhibitor from Ixodes ricinus saliva (PubMed:34502392). Interacts (inactive and activated) with nitrophorin-2, an anticoagulant protein from Rhodnius prolixus (PubMed:10692472).</text>
</comment>
<comment type="interaction">
    <interactant intactId="EBI-9640450">
        <id>P00740</id>
    </interactant>
    <interactant intactId="EBI-11621603">
        <id>PRO_0000002968</id>
        <label>F8</label>
        <dbReference type="UniProtKB" id="P00451"/>
    </interactant>
    <organismsDiffer>false</organismsDiffer>
    <experiments>2</experiments>
</comment>
<comment type="interaction">
    <interactant intactId="EBI-9640450">
        <id>P00740</id>
    </interactant>
    <interactant intactId="EBI-16178491">
        <id>Q3U4G3</id>
        <label>Xxylt1</label>
    </interactant>
    <organismsDiffer>true</organismsDiffer>
    <experiments>3</experiments>
</comment>
<comment type="subcellular location">
    <subcellularLocation>
        <location evidence="26 42 57 70 73">Secreted</location>
    </subcellularLocation>
</comment>
<comment type="alternative products">
    <event type="alternative splicing"/>
    <isoform>
        <id>P00740-1</id>
        <name>1</name>
        <sequence type="displayed"/>
    </isoform>
    <isoform>
        <id>P00740-2</id>
        <name>2</name>
        <sequence type="described" ref="VSP_047689"/>
    </isoform>
</comment>
<comment type="tissue specificity">
    <text evidence="26 42 57">Detected in blood plasma (at protein level) (PubMed:19846852, PubMed:2592373, PubMed:3857619, PubMed:8295821, PubMed:9169594). Synthesized primarily in the liver and secreted in plasma.</text>
</comment>
<comment type="domain">
    <text evidence="1 19 23 59">Calcium binds to the gamma-carboxyglutamic acid (Gla) residues in the Gla domain. Calcium can also bind, with stronger affinity, to another site beyond the Gla domain (PubMed:6425296). Under physiological ion concentrations, Ca(2+) is displaced by Mg(2+) from some of the gammaglutamate residues in the N-terminal Gla domain. This leads to a subtle conformation change that may affect the interaction with its binding protein (By similarity).</text>
</comment>
<comment type="PTM">
    <text evidence="23 27 28 33 42 45 70 73">Activated by factor XIa, which excises the activation peptide (PubMed:1730085, PubMed:9169594, PubMed:22961984). The propeptide can also be removed by snake venom protease (PubMed:20004170, PubMed:20080729). Activated by coagulation factor VIIa-tissue factor (F7-F3) complex in calcium-dependent manner (PubMed:271951).</text>
</comment>
<comment type="PTM">
    <text evidence="62">The iron and 2-oxoglutarate dependent 3-hydroxylation of aspartate and asparagine is (R) stereospecific within EGF domains.</text>
</comment>
<comment type="disease" evidence="6 10 11 14 15 17 18 21 22 24 25 32 34 35 36 37 39 41 42 43 44 46 47 48 49 52 53 54 56 61 64 65 66 68 69 70 71 73 74 76 77 78">
    <disease id="DI-02248">
        <name>Hemophilia B</name>
        <acronym>HEMB</acronym>
        <description>An X-linked blood coagulation disorder characterized by a permanent tendency to hemorrhage, due to factor IX deficiency. It is phenotypically similar to hemophilia A, but patients present with fewer symptoms. Many patients are asymptomatic until the hemostatic system is stressed by surgery or trauma.</description>
        <dbReference type="MIM" id="306900"/>
    </disease>
    <text>The disease is caused by variants affecting the gene represented in this entry.</text>
</comment>
<comment type="disease">
    <text evidence="14 32 39 43 46 52 56 61 66 70 73 78">Mutations in position 43 (Oxford-3, San Dimas) and 46 (Cambridge) prevents cleavage of the propeptide (PubMed:12588353, PubMed:25251685, PubMed:2738071, PubMed:3009023, PubMed:8295821, PubMed:9169594, PubMed:9600455). Mutation in position 93 (Alabama) probably fails to bind to cell membranes (PubMed:3790720). Mutation in position 191 (Chapel-Hill) or in position 226 (Nagoya or Hilo) prevent cleavage of the activation peptide (PubMed:12588353, PubMed:2162822, PubMed:25251685, PubMed:2713493, PubMed:6603618, PubMed:8076946).</text>
</comment>
<comment type="disease" evidence="26">
    <disease id="DI-02524">
        <name>Thrombophilia, X-linked, due to factor IX defect</name>
        <acronym>THPH8</acronym>
        <description>A hemostatic disorder characterized by a tendency to thrombosis.</description>
        <dbReference type="MIM" id="300807"/>
    </disease>
    <text>The disease is caused by variants affecting the gene represented in this entry.</text>
</comment>
<comment type="disease" evidence="50 72 75">
    <disease id="DI-05867">
        <name>Warfarin sensitivity, X-linked</name>
        <acronym>WARFS</acronym>
        <description>A condition characterized by sensitivity to warfarin, a drugs used as anti-coagulants for the prevention of thromboembolic diseases in subjects with deep vein thrombosis, atrial fibrillation, or mechanical heart valve replacement. Warfarin sensitive individuals develop bleeding complications when they are given warfarin within the therapeutic ranges.</description>
        <dbReference type="MIM" id="301052"/>
    </disease>
    <text>The disease is caused by variants affecting the gene represented in this entry.</text>
</comment>
<comment type="pharmaceutical">
    <text>Available under the name BeneFix (Baxter and American Home Products). Used to treat hemophilia B.</text>
</comment>
<comment type="miscellaneous">
    <text>In 1952, one of the earliest researchers of the disease, Dr. R.G. Macfarlane used the patient's surname, Christmas, to refer to the disease and also to refer to the clotting factor which he called the 'Christmas Factor'. At the time, Stephen Christmas was a 5-year-old boy. He died in 1993 at the age of 46 from acquired immunodeficiency syndrome contracted through treatment with blood products.</text>
</comment>
<comment type="similarity">
    <text evidence="4">Belongs to the peptidase S1 family.</text>
</comment>
<comment type="online information" name="Wikipedia">
    <link uri="https://en.wikipedia.org/wiki/Factor_IX"/>
    <text>Factor IX entry</text>
</comment>
<comment type="online information" name="Factor IX Mutation Database">
    <link uri="http://www.factorix.org/"/>
</comment>
<comment type="online information" name="BeneFix">
    <link uri="https://www.pfizer.com/products/product-detail/benefix"/>
    <text>Clinical information on BeneFix</text>
</comment>
<comment type="online information" name="Protein Spotlight">
    <link uri="https://www.proteinspotlight.org/back_issues/041"/>
    <text>The Christmas Factor - Issue 41 of December 2003</text>
</comment>